<comment type="function">
    <molecule>Mature core protein</molecule>
    <text evidence="3 5 6 7 12 20">Packages viral RNA to form a viral nucleocapsid, and promotes virion budding (Probable). Participates in the viral particle production as a result of its interaction with the non-structural protein 5A (By similarity). Binds RNA and may function as a RNA chaperone to induce the RNA structural rearrangements taking place during virus replication (By similarity). Modulates viral translation initiation by interacting with viral IRES and 40S ribosomal subunit (By similarity). Affects various cell signaling pathways, host immunity and lipid metabolism (Probable). Prevents the establishment of cellular antiviral state by blocking the interferon-alpha/beta (IFN-alpha/beta) and IFN-gamma signaling pathways and by blocking the formation of phosphorylated STAT1 and promoting ubiquitin-mediated proteasome-dependent degradation of STAT1 (By similarity). Activates STAT3 leading to cellular transformation (By similarity). Regulates the activity of cellular genes, including c-myc and c-fos (By similarity). May repress the promoter of p53, and sequester CREB3 and SP110 isoform 3/Sp110b in the cytoplasm (By similarity). Represses cell cycle negative regulating factor CDKN1A, thereby interrupting an important check point of normal cell cycle regulation (By similarity). Targets transcription factors involved in the regulation of inflammatory responses and in the immune response: suppresses TNF-induced NF-kappa-B activation, and activates AP-1 (By similarity). Binds to dendritic cells (DCs) via C1QR1, resulting in down-regulation of T-lymphocytes proliferation (By similarity). Alters lipid metabolism by interacting with hepatocellular proteins involved in lipid accumulation and storage (By similarity). Induces up-regulation of FAS promoter activity, and thereby contributes to the increased triglyceride accumulation in hepatocytes (steatosis) (By similarity).</text>
</comment>
<comment type="function">
    <molecule>Envelope glycoprotein E1</molecule>
    <text evidence="6">Forms a heterodimer with envelope glycoprotein E2, which mediates virus attachment to the host cell, virion internalization through clathrin-dependent endocytosis and fusion with host membrane (By similarity). Fusion with the host cell is most likely mediated by both E1 and E2, through conformational rearrangements of the heterodimer required for fusion rather than a classical class II fusion mechanism (By similarity). E1/E2 heterodimer binds host apolipoproteins such as APOB and ApoE thereby forming a lipo-viro-particle (LVP) (By similarity). APOE associated to the LVP allows the initial virus attachment to cell surface receptors such as the heparan sulfate proteoglycans (HSPGs), syndecan-1 (SDC1), syndecan-1 (SDC2), the low-density lipoprotein receptor (LDLR) and scavenger receptor class B type I (SCARB1) (By similarity). The cholesterol transfer activity of SCARB1 allows E2 exposure and binding of E2 to SCARB1 and the tetraspanin CD81 (By similarity). E1/E2 heterodimer binding on CD81 activates the epithelial growth factor receptor (EGFR) signaling pathway (By similarity). Diffusion of the complex E1-E2-EGFR-SCARB1-CD81 to the cell lateral membrane allows further interaction with Claudin 1 (CLDN1) and occludin (OCLN) to finally trigger HCV entry (By similarity).</text>
</comment>
<comment type="function">
    <molecule>Envelope glycoprotein E2</molecule>
    <text evidence="5 6">Forms a heterodimer with envelope glycoprotein E1, which mediates virus attachment to the host cell, virion internalization through clathrin-dependent endocytosis and fusion with host membrane (By similarity). Fusion with the host cell is most likely mediated by both E1 and E2, through conformational rearrangements of the heterodimer required for fusion rather than a classical class II fusion mechanism (By similarity). The interaction between envelope glycoprotein E2 and host apolipoprotein E/APOE allows the proper assembly, maturation and infectivity of the viral particles (By similarity). This interaction is probably promoted via the up-regulation of cellular autophagy by the virus (By similarity). E1/E2 heterodimer binds host apolipoproteins such as APOB and APOE thereby forming a lipo-viro-particle (LVP) (By similarity). APOE associated to the LVP allows the initial virus attachment to cell surface receptors such as the heparan sulfate proteoglycans (HSPGs), syndecan-1 (SDC1), syndecan-1 (SDC2), the low-density lipoprotein receptor (LDLR) and scavenger receptor class B type I (SCARB1) (By similarity). The cholesterol transfer activity of SCARB1 allows E2 exposure and binding of E2 to SCARB1 and the tetraspanin CD81 (By similarity). E1/E2 heterodimer binding on CD81 activates the epithelial growth factor receptor (EGFR) signaling pathway (By similarity). Diffusion of the complex E1-E2-EGFR-SCARB1-CD81 to the cell lateral membrane allows further interaction with Claudin 1 (CLDN1) and occludin (OCLN) to finally trigger HCV entry (By similarity). Inhibits host EIF2AK2/PKR activation, preventing the establishment of an antiviral state (By similarity). Viral ligand for CD209/DC-SIGN and CLEC4M/DC-SIGNR, which are respectively found on dendritic cells (DCs), and on liver sinusoidal endothelial cells and macrophage-like cells of lymph node sinuses (By similarity). These interactions allow the capture of circulating HCV particles by these cells and subsequent facilitated transmission to permissive cells such as hepatocytes and lymphocyte subpopulations (By similarity). The interaction between E2 and host amino acid transporter complex formed by SLC3A2 and SLC7A5/LAT1 may facilitate viral entry into host cell (By similarity).</text>
</comment>
<comment type="function">
    <molecule>Viroporin p7</molecule>
    <text evidence="6 12 20">Ion channel protein that acts as a viroporin and plays an essential role in the assembly, envelopment and secretion of viral particles (By similarity). Regulates the host cell secretory pathway, which induces the intracellular retention of viral glycoproteins and favors assembly of viral particles (By similarity). Creates a pore in acidic organelles and releases Ca(2+) and H(+) in the cytoplasm of infected cells, leading to a productive viral infection (By similarity). High levels of cytoplasmic Ca(2+) may trigger membrane trafficking and transport of viral ER-associated proteins to viroplasms, sites of viral genome replication (Probable). This ionic imbalance induces the assembly of the inflammasome complex, which triggers the maturation of pro-IL-1beta into IL-1beta through the action of caspase-1 (By similarity). Targets also host mitochondria and induces mitochondrial depolarization (By similarity). In addition of its role as a viroporin, acts as a lipid raft adhesion factor (By similarity).</text>
</comment>
<comment type="function">
    <molecule>Protease NS2</molecule>
    <text evidence="4 6">Cysteine protease required for the proteolytic auto-cleavage between the non-structural proteins NS2 and NS3 (By similarity). The N-terminus of NS3 is required for the function of NS2 protease (active region NS2-3) (By similarity). Promotes the initiation of viral particle assembly by mediating the interaction between structural and non-structural proteins (By similarity).</text>
</comment>
<comment type="function">
    <molecule>Serine protease/helicase NS3</molecule>
    <text evidence="6 13">Displays three enzymatic activities: serine protease with a chymotrypsin-like fold, NTPase and RNA helicase (By similarity). NS3 serine protease, in association with NS4A, is responsible for the cleavages of NS3-NS4A, NS4A-NS4B, NS4B-NS5A and NS5A-NS5B (By similarity). The NS3/NS4A complex prevents phosphorylation of host IRF3, thus preventing the establishment of dsRNA induced antiviral state (By similarity). The NS3/NS4A complex induces host amino acid transporter component SLC3A2, thus contributing to HCV propagation (By similarity). NS3 RNA helicase binds to RNA and unwinds both dsDNA and dsRNA in the 3' to 5' direction, and likely resolves RNA complicated stable secondary structures in the template strand (By similarity). Binds a single ATP and catalyzes the unzipping of a single base pair of dsRNA (By similarity). Inhibits host antiviral proteins TBK1 and IRF3 thereby preventing the establishment of an antiviral state (By similarity). Cleaves host MAVS/CARDIF thereby preventing the establishment of an antiviral state (By similarity). Cleaves host TICAM1/TRIF, thereby disrupting TLR3 signaling and preventing the establishment of an antiviral state (By similarity).</text>
</comment>
<comment type="function">
    <molecule>Non-structural protein 4B</molecule>
    <text evidence="6">Induces a specific membrane alteration that serves as a scaffold for the virus replication complex (By similarity). This membrane alteration gives rise to the so-called ER-derived membranous web that contains the replication complex (By similarity). NS4B self-interaction contributes to its function in membranous web formation (By similarity). Promotes host TRIF protein degradation in a CASP8-dependent manner thereby inhibiting host TLR3-mediated interferon signaling (By similarity). Disrupts the interaction between STING and TBK1 contributing to the inhibition of interferon signaling (By similarity).</text>
</comment>
<comment type="function">
    <molecule>Non-structural protein 5A</molecule>
    <text evidence="3 5 6 12 13">Phosphorylated protein that is indispensable for viral replication and assembly (By similarity). Both hypo- and hyperphosphorylated states are required for the viral life cycle (By similarity). The hyperphosphorylated form of NS5A is an inhibitor of viral replication (By similarity). Involved in RNA-binding and especially in binding to the viral genome (By similarity). Zinc is essential for RNA-binding (By similarity). Participates in the viral particle production as a result of its interaction with the mature viral core protein (By similarity). Its interaction with host VAPB may target the viral replication complex to vesicles (By similarity). Down-regulates viral IRES translation initiation (By similarity). Mediates interferon resistance, presumably by interacting with and inhibiting host EIF2AK2/PKR (By similarity). Prevents BIN1-induced apoptosis (By similarity). Acts as a transcriptional activator of some host genes important for viral replication when localized in the nucleus (By similarity). Via the interaction with host PACSIN2, modulates lipid droplet formation in order to promote virion assembly (By similarity). Modulates TNFRSF21/DR6 signaling pathway for viral propagation (By similarity).</text>
</comment>
<comment type="function">
    <molecule>RNA-directed RNA polymerase</molecule>
    <text evidence="6">RNA-dependent RNA polymerase that performs primer-template recognition and RNA synthesis during viral replication. Initiates RNA transcription/replication at a flavin adenine dinucleotide (FAD), resulting in a 5'- FAD cap on viral RNAs. In this way, recognition of viral 5' RNA by host pattern recognition receptors can be bypassed, thereby evading activation of antiviral pathways.</text>
</comment>
<comment type="catalytic activity">
    <molecule>Serine protease/helicase NS3</molecule>
    <reaction evidence="6">
        <text>Hydrolysis of four peptide bonds in the viral precursor polyprotein, commonly with Asp or Glu in the P6 position, Cys or Thr in P1 and Ser or Ala in P1'.</text>
        <dbReference type="EC" id="3.4.21.98"/>
    </reaction>
</comment>
<comment type="catalytic activity">
    <molecule>Serine protease/helicase NS3</molecule>
    <reaction evidence="6">
        <text>a ribonucleoside 5'-triphosphate + H2O = a ribonucleoside 5'-diphosphate + phosphate + H(+)</text>
        <dbReference type="Rhea" id="RHEA:23680"/>
        <dbReference type="ChEBI" id="CHEBI:15377"/>
        <dbReference type="ChEBI" id="CHEBI:15378"/>
        <dbReference type="ChEBI" id="CHEBI:43474"/>
        <dbReference type="ChEBI" id="CHEBI:57930"/>
        <dbReference type="ChEBI" id="CHEBI:61557"/>
        <dbReference type="EC" id="3.6.1.15"/>
    </reaction>
</comment>
<comment type="catalytic activity">
    <molecule>Serine protease/helicase NS3</molecule>
    <reaction evidence="6">
        <text>ATP + H2O = ADP + phosphate + H(+)</text>
        <dbReference type="Rhea" id="RHEA:13065"/>
        <dbReference type="ChEBI" id="CHEBI:15377"/>
        <dbReference type="ChEBI" id="CHEBI:15378"/>
        <dbReference type="ChEBI" id="CHEBI:30616"/>
        <dbReference type="ChEBI" id="CHEBI:43474"/>
        <dbReference type="ChEBI" id="CHEBI:456216"/>
        <dbReference type="EC" id="3.6.4.13"/>
    </reaction>
</comment>
<comment type="catalytic activity">
    <molecule>RNA-directed RNA polymerase</molecule>
    <reaction evidence="15">
        <text>RNA(n) + a ribonucleoside 5'-triphosphate = RNA(n+1) + diphosphate</text>
        <dbReference type="Rhea" id="RHEA:21248"/>
        <dbReference type="Rhea" id="RHEA-COMP:14527"/>
        <dbReference type="Rhea" id="RHEA-COMP:17342"/>
        <dbReference type="ChEBI" id="CHEBI:33019"/>
        <dbReference type="ChEBI" id="CHEBI:61557"/>
        <dbReference type="ChEBI" id="CHEBI:140395"/>
        <dbReference type="EC" id="2.7.7.48"/>
    </reaction>
</comment>
<comment type="cofactor">
    <molecule>Protease NS2</molecule>
    <cofactor evidence="4">
        <name>Zn(2+)</name>
        <dbReference type="ChEBI" id="CHEBI:29105"/>
    </cofactor>
    <text evidence="4">Activity of protease NS2 is dependent on zinc ions and completely inhibited by EDTA. This is probably due to the fact that NS2 protease activity needs NS3 N-terminus that binds a zinc atom (active region NS2-3).</text>
</comment>
<comment type="cofactor">
    <molecule>Serine protease/helicase NS3</molecule>
    <cofactor evidence="4">
        <name>Zn(2+)</name>
        <dbReference type="ChEBI" id="CHEBI:29105"/>
    </cofactor>
    <cofactor evidence="13">
        <name>Mg(2+)</name>
        <dbReference type="ChEBI" id="CHEBI:18420"/>
    </cofactor>
    <text evidence="4 13">Binds 1 zinc ion, which has a structural role (By similarity). The magnesium ion is essential for the helicase activity (By similarity).</text>
</comment>
<comment type="cofactor">
    <molecule>RNA-directed RNA polymerase</molecule>
    <cofactor evidence="4">
        <name>Mg(2+)</name>
        <dbReference type="ChEBI" id="CHEBI:18420"/>
    </cofactor>
    <text evidence="4">Binds 2 magnesium ion that constitute a dinuclear catalytic metal center.</text>
</comment>
<comment type="activity regulation">
    <molecule>Viroporin p7</molecule>
    <text evidence="3 6">Inhibited by the antiviral drug hexamethylene amiloride (By similarity). Inhibition by amantadine appears to be genotype-dependent (By similarity). Also inhibited by long-alkyl-chain iminosugar derivatives (By similarity).</text>
</comment>
<comment type="activity regulation">
    <molecule>RNA-directed RNA polymerase</molecule>
    <text evidence="6">Activity is up-regulated by PRK2/PKN2-mediated phosphorylation.</text>
</comment>
<comment type="subunit">
    <molecule>Mature core protein</molecule>
    <text evidence="3 5 6 7 9 10 12">Homooligomer (By similarity). Interacts with E1 (via C-terminus) (By similarity). Interacts with the non-structural protein 5A (By similarity). Interacts (via N-terminus) with host STAT1 (via SH2 domain); this interaction results in decreased STAT1 phosphorylation and ubiquitin-mediated proteasome-dependent STAT1 degradation, leading to decreased IFN-stimulated gene transcription (By similarity). Interacts with host STAT3; this interaction constitutively activates STAT3 (By similarity). Interacts with host LTBR receptor (By similarity). Interacts with host TNFRSF1A receptor and possibly induces apoptosis (By similarity). Interacts with host HNRPK (By similarity). Interacts with host YWHAE (By similarity). Interacts with host UBE3A/E6AP (By similarity). Interacts with host DDX3X (By similarity). Interacts with host APOA2 (By similarity). Interacts with host RXRA protein (By similarity). Interacts with host SP110 isoform 3/Sp110b; this interaction sequesters the transcriptional corepressor SP110 away from the nucleus (By similarity). Interacts with host CREB3 nuclear transcription protein; this interaction triggers cell transformation (By similarity). Interacts with host ACY3 (By similarity). Interacts with host C1QR1 (By similarity). Interacts with host RBM24; this interaction, which enhances the interaction of the mature core protein with 5'-UTR, may inhibit viral translation and favor replication (By similarity). Interacts with host EIF2AK2/PKR; this interaction induces the autophosphorylation of EIF2AK2 (By similarity). Part of the viral assembly initiation complex composed of NS2, E1, E2, NS3, NS4A, NS5A and the mature core protein (By similarity).</text>
</comment>
<comment type="subunit">
    <molecule>Envelope glycoprotein E1</molecule>
    <text evidence="6 12">Forms a heterodimer with envelope glycoprotein E2 (By similarity). Interacts with mature core protein (By similarity). Interacts with protease NS2 (By similarity). The heterodimer E1/E2 interacts with host CLDN1; this interaction plays a role in viral entry into host cell (By similarity). Interacts with host SPSB2 (via C-terminus) (By similarity). Part of the viral assembly initiation complex composed of NS2, E1, E2, NS3, NS4A, NS5A and the mature core protein (By similarity). Interacts with host NEURL3; this interaction prevents E1 binding to glycoprotein E2 (By similarity).</text>
</comment>
<comment type="subunit">
    <molecule>Envelope glycoprotein E2</molecule>
    <text evidence="6 12 13">Forms a heterodimer with envelope glycoprotein E1 (By similarity). Interacts with host CD81 and SCARB1 receptors; these interactions play a role in viral entry into host cell (By similarity). Interacts with host EIF2AK2/PKR; this interaction inhibits EIF2AK2 and probably allows the virus to evade the innate immune response (By similarity). Interacts with host CD209/DC-SIGN and CLEC4M/DC-SIGNR (By similarity). Interact with host SPCS1; this interaction is essential for viral particle assembly (By similarity). Interacts with protease NS2 (By similarity). The heterodimer E1/E2 interacts with host CLDN1; this interaction plays a role in viral entry into host cell (By similarity). Part of the viral assembly initiation complex composed of NS2, E1, E2, NS3, NS4A, NS5A and the mature core protein (By similarity). Interacts with host SLC3A2/4F2hc; the interaction may facilitate viral entry into host cell (By similarity). Interacts with human PLSCR1 (By similarity).</text>
</comment>
<comment type="subunit">
    <molecule>Viroporin p7</molecule>
    <text evidence="2 6 12">Homohexamer (By similarity). Homoheptamer (By similarity). Interacts with protease NS2 (By similarity).</text>
</comment>
<comment type="subunit">
    <molecule>Protease NS2</molecule>
    <text evidence="6 12">Homodimer (By similarity). Interacts with host SPCS1; this interaction is essential for viral particle assembly (By similarity). Interacts with envelope glycoprotein E1 (By similarity). Interacts with envelope glycoprotein E2 (By similarity). Interacts with viroporin p7 (By similarity). Interacts with serine protease/helicase NS3 (By similarity). Part of the replication complex composed of NS2, NS3, NS4A, NS4B, NS5A and the RNA-directed RNA polymerase embedded in an ER-derived membranous web (By similarity). Part of the viral assembly initiation complex composed of NS2, E1, E2, NS3, NS4A, NS5A and the mature core protein (By similarity).</text>
</comment>
<comment type="subunit">
    <molecule>Serine protease/helicase NS3</molecule>
    <text evidence="4 6 12 13">Interacts with protease NS2 (By similarity). Interacts with non-structural protein 4A; this interaction stabilizes the folding of NS3 serine protease (By similarity). NS3-NS4A interaction is essential for NS3 activation and allows membrane anchorage of the latter (By similarity). NS3/NS4A complex also prevents phosphorylation of host IRF3, thus preventing the establishment of dsRNA induced antiviral state (By similarity). Interacts with host MAVS; this interaction leads to the cleavage and inhibition of host MAVS (By similarity). Interacts with host TICAM1; this interaction leads to the cleavage and inhibition of host TICAM1 (By similarity). Interacts with host TANK-binding kinase/TBK1; this interaction results in the inhibition of the association between TBK1 and IRF3, which leads to the inhibition of IRF3 activation (By similarity). Interacts with host RBM24 (By similarity). Part of the replication complex composed of NS2, NS3, NS4A, NS4B, NS5A and the RNA-directed RNA polymerase embedded in an ER-derived membranous web (By similarity). Part of the viral assembly initiation complex composed of NS2, E1, E2, NS3, NS4A, NS5A and the mature core protein (By similarity).</text>
</comment>
<comment type="subunit">
    <molecule>Non-structural protein 4A</molecule>
    <text evidence="3 4 6 12">Interacts with NS3 serine protease; this interaction stabilizes the folding of NS3 serine protease (By similarity). NS3-NS4A interaction is essential for NS3 activation and allows membrane anchorage of the latter (By similarity). Interacts with non-structural protein 5A (via N-terminus) (By similarity). Part of the replication complex composed of NS2, NS3, NS4A, NS4B, NS5A and the RNA-directed RNA polymerase embedded in an ER-derived membranous web (By similarity). Part of the viral assembly initiation complex composed of NS2, E1, E2, NS3, NS4A, NS5A and the mature core protein (By similarity).</text>
</comment>
<comment type="subunit">
    <molecule>Non-structural protein 4B</molecule>
    <text evidence="6 12">Homomultimer (By similarity). Interacts with non-structural protein NS5A (By similarity). Interacts with host PLA2G4C; this interaction likely initiates the recruitment of replication complexes to lipid droplets (By similarity). Interacts with host STING; this interaction disrupts the interaction between STING and TBK1 thereby suppressing the interferon signaling (By similarity). Part of the replication complex composed of NS2, NS3, NS4A, NS4B, NS5A and the RNA-directed RNA polymerase embedded in an ER-derived membranous web (By similarity).</text>
</comment>
<comment type="subunit">
    <molecule>Non-structural protein 5A</molecule>
    <text evidence="3 4 5 6 12">Monomer. Homodimer; dimerization is required for RNA-binding (By similarity). Interacts with the mature core protein (By similarity). Interacts (via N-terminus) with non-structural protein 4A (By similarity). Interacts with non-structural protein 4B. Interacts (via region D2) with RNA-directed RNA polymerase (By similarity). Part of the viral assembly initiation complex composed of NS2, E1, E2, NS3, NS4A, NS5A and the mature core protein (By similarity). Part of the replication complex composed of NS2, NS3, NS4A, NS4B, NS5A and the RNA-directed RNA polymerase embedded in an ER-derived membranous web (By similarity). Interacts with host GRB2 (By similarity). Interacts with host BIN1 (By similarity). Interacts with host PIK3R1 (By similarity). Interacts with host SRCAP (By similarity). Interacts with host FKBP8 (By similarity). Interacts (via C-terminus) with host VAPB (via MSP domain). Interacts with host EIF2AK2/PKR; this interaction leads to disruption of EIF2AK2 dimerization by NS5A and probably allows the virus to evade the innate immune response. Interacts (via N-terminus) with host PACSIN2 (via N-terminus); this interaction attenuates protein kinase C alpha-mediated phosphorylation of PACSIN2 by disrupting the interaction between PACSIN2 and PRKCA (By similarity). Interacts (via N-terminus) with host SRC kinase (via SH2 domain) (By similarity). Interacts with most Src-family kinases (By similarity). Interacts with host IFI27 and SKP2; promotes the ubiquitin-mediated proteasomal degradation of NS5A (By similarity). Interacts with host GPS2 (By similarity). Interacts with host TNFRSF21; this interaction allows the modulation by the virus of JNK, p38 MAPK, STAT3, and Akt signaling pathways in a DR6-dependent manner. Interacts (via N-terminus) with host CIDEB (via N-terminus); this interaction seems to regulate the association of HCV particles with APOE (By similarity). Interacts with host CHKA/Choline Kinase-alpha; CHKA bridges host PI4KA and NS5A and potentiates NS5A-stimulated PI4KA activity, which then facilitates the targeting of the ternary complex to the ER for viral replication (By similarity). Interacts with host SPSB2 (via C-terminus); this interaction targets NS5A for ubiquitination and degradation (By similarity). Interacts with host RAB18; this interaction may promote the association of NS5A and other replicase components with lipid droplets (By similarity). Interacts (via region D2) with host PPIA/CYPA; the interaction stimulates RNA-binding ability of NS5A and is dependent on the peptidyl-prolyl cis-trans isomerase activity of PPIA/CYPA. Interacts with host TRIM14; this interaction induces the degradation of NS5A (By similarity).</text>
</comment>
<comment type="subunit">
    <molecule>RNA-directed RNA polymerase</molecule>
    <text evidence="6">Homooligomer (By similarity). Interacts with non-structural protein 5A (By similarity). Interacts with host VAPB (By similarity). Interacts with host PRK2/PKN2 (By similarity). Interacts with host HNRNPA1 and SEPT6; these interactions facilitate viral replication (By similarity). Part of the replication complex composed of NS2, NS3, NS4A, NS4B, NS5A and the RNA-directed RNA polymerase (By similarity).</text>
</comment>
<comment type="subcellular location">
    <molecule>Core protein precursor</molecule>
    <subcellularLocation>
        <location evidence="5">Host endoplasmic reticulum membrane</location>
        <topology evidence="14">Single-pass membrane protein</topology>
    </subcellularLocation>
    <subcellularLocation>
        <location evidence="5">Host mitochondrion membrane</location>
        <topology evidence="14">Single-pass type I membrane protein</topology>
    </subcellularLocation>
    <text>The C-terminal transmembrane domain of the core protein precursor contains an ER signal leading the nascent polyprotein to the ER membrane.</text>
</comment>
<comment type="subcellular location">
    <molecule>Mature core protein</molecule>
    <subcellularLocation>
        <location evidence="12">Virion</location>
    </subcellularLocation>
    <subcellularLocation>
        <location evidence="12">Host cytoplasm</location>
    </subcellularLocation>
    <subcellularLocation>
        <location evidence="3">Host nucleus</location>
    </subcellularLocation>
    <subcellularLocation>
        <location evidence="12">Host lipid droplet</location>
    </subcellularLocation>
    <text evidence="6">Only a minor proportion of core protein is present in the nucleus (By similarity). Probably present on the surface of lipid droplets (By similarity).</text>
</comment>
<comment type="subcellular location">
    <molecule>Envelope glycoprotein E1</molecule>
    <subcellularLocation>
        <location evidence="20">Virion membrane</location>
        <topology evidence="20">Single-pass type I membrane protein</topology>
    </subcellularLocation>
    <subcellularLocation>
        <location>Host endoplasmic reticulum membrane</location>
        <topology evidence="6">Single-pass type I membrane protein</topology>
    </subcellularLocation>
    <text evidence="6">The C-terminal transmembrane domain acts as a signal sequence and forms a hairpin structure before cleavage by host signal peptidase (By similarity). After cleavage, the membrane sequence is retained at the C-terminus of the protein, serving as ER membrane anchor (By similarity). A reorientation of the second hydrophobic stretch occurs after cleavage producing a single reoriented transmembrane domain (By similarity). These events explain the final topology of the protein (By similarity).</text>
</comment>
<comment type="subcellular location">
    <molecule>Envelope glycoprotein E2</molecule>
    <subcellularLocation>
        <location evidence="20">Virion membrane</location>
        <topology evidence="20">Single-pass type I membrane protein</topology>
    </subcellularLocation>
    <subcellularLocation>
        <location>Host endoplasmic reticulum membrane</location>
        <topology evidence="6">Single-pass type I membrane protein</topology>
    </subcellularLocation>
    <subcellularLocation>
        <location evidence="13">Host lipid droplet</location>
    </subcellularLocation>
    <text evidence="6">The C-terminal transmembrane domain acts as a signal sequence and forms a hairpin structure before cleavage by host signal peptidase (By similarity). After cleavage, the membrane sequence is retained at the C-terminus of the protein, serving as ER membrane anchor (By similarity). A reorientation of the second hydrophobic stretch occurs after cleavage producing a single reoriented transmembrane domain (By similarity). These events explain the final topology of the protein (By similarity).</text>
</comment>
<comment type="subcellular location">
    <molecule>Viroporin p7</molecule>
    <subcellularLocation>
        <location evidence="6">Host endoplasmic reticulum membrane</location>
        <topology evidence="6">Multi-pass membrane protein</topology>
    </subcellularLocation>
    <subcellularLocation>
        <location evidence="6">Host mitochondrion</location>
    </subcellularLocation>
    <subcellularLocation>
        <location evidence="6">Host cell membrane</location>
    </subcellularLocation>
    <text evidence="6">The C-terminus of p7 membrane domain acts as a signal sequence (By similarity). After cleavage by host signal peptidase, the membrane sequence is retained at the C-terminus of the protein, serving as ER membrane anchor (By similarity). ER retention of p7 is leaky and a small fraction reaches the plasma membrane (By similarity).</text>
</comment>
<comment type="subcellular location">
    <molecule>Protease NS2</molecule>
    <subcellularLocation>
        <location evidence="6">Host endoplasmic reticulum membrane</location>
        <topology evidence="6">Multi-pass membrane protein</topology>
    </subcellularLocation>
    <subcellularLocation>
        <location evidence="13">Host lipid droplet</location>
    </subcellularLocation>
    <text evidence="12">Probably present on the surface of lipid droplets.</text>
</comment>
<comment type="subcellular location">
    <molecule>Serine protease/helicase NS3</molecule>
    <subcellularLocation>
        <location evidence="20">Host endoplasmic reticulum membrane</location>
        <topology evidence="20">Peripheral membrane protein</topology>
    </subcellularLocation>
    <text evidence="20">NS3 is associated to the ER membrane through its binding to NS4A.</text>
</comment>
<comment type="subcellular location">
    <molecule>Non-structural protein 4A</molecule>
    <subcellularLocation>
        <location evidence="20">Host endoplasmic reticulum membrane</location>
        <topology evidence="20">Single-pass type I membrane protein</topology>
    </subcellularLocation>
    <text>Host membrane insertion occurs after processing by the NS3 protease.</text>
</comment>
<comment type="subcellular location">
    <molecule>Non-structural protein 4B</molecule>
    <subcellularLocation>
        <location evidence="6">Host endoplasmic reticulum membrane</location>
        <topology evidence="6">Multi-pass membrane protein</topology>
    </subcellularLocation>
    <text evidence="6">A reorientation of the N-terminus into the ER lumen occurs post-translationally.</text>
</comment>
<comment type="subcellular location">
    <molecule>Non-structural protein 5A</molecule>
    <subcellularLocation>
        <location evidence="6">Host endoplasmic reticulum membrane</location>
        <topology evidence="6">Peripheral membrane protein</topology>
    </subcellularLocation>
    <subcellularLocation>
        <location evidence="6">Host cytoplasm</location>
        <location evidence="6">Host perinuclear region</location>
    </subcellularLocation>
    <subcellularLocation>
        <location evidence="3">Host mitochondrion</location>
    </subcellularLocation>
    <subcellularLocation>
        <location evidence="6">Host cytoplasm</location>
    </subcellularLocation>
    <subcellularLocation>
        <location evidence="3">Host nucleus</location>
    </subcellularLocation>
    <subcellularLocation>
        <location evidence="13">Host lipid droplet</location>
    </subcellularLocation>
    <text evidence="3 6">Host membrane insertion occurs after processing by the NS3 protease (By similarity). Localizes at the surface of lipid droplets (By similarity).</text>
</comment>
<comment type="subcellular location">
    <molecule>RNA-directed RNA polymerase</molecule>
    <subcellularLocation>
        <location evidence="6">Host cytoplasm</location>
    </subcellularLocation>
    <subcellularLocation>
        <location>Host endoplasmic reticulum membrane</location>
        <topology evidence="6">Single-pass type IV membrane protein</topology>
    </subcellularLocation>
    <text evidence="6">Host membrane insertion occurs after processing by the NS3 protease.</text>
</comment>
<comment type="domain">
    <molecule>Envelope glycoprotein E1</molecule>
    <text evidence="6">The transmembrane regions of envelope E1 and E2 glycoproteins are involved in heterodimer formation, ER localization, and assembly of these proteins.</text>
</comment>
<comment type="domain">
    <molecule>Envelope glycoprotein E2</molecule>
    <text evidence="4 6">The transmembrane regions of envelope E1 and E2 glycoproteins are involved in heterodimer formation, ER localization, and assembly of these proteins (By similarity). Envelope E2 glycoprotein contain two highly variable regions called hypervariable region 1 and 2 (HVR1 and HVR2) (By similarity). E2 also contain two segments involved in CD81-binding (By similarity). HVR1 is implicated in the SCARB1-mediated cell entry and probably acts as a regulator of the association of particles with lipids (By similarity).</text>
</comment>
<comment type="domain">
    <molecule>Protease NS2</molecule>
    <text evidence="4">The N-terminus of NS3 is required for the catalytic activity of protease NS2 (By similarity). The minimal catalytic region includes the C-terminus of NS2 and the N-terminus NS3 protease domain (active region NS2-3) (By similarity).</text>
</comment>
<comment type="domain">
    <molecule>Serine protease/helicase NS3</molecule>
    <text evidence="3 6">The N-terminal one-third contains the protease activity (By similarity). This region contains a zinc atom that does not belong to the active site, but may play a structural rather than a catalytic role (By similarity). This region is essential for the activity of protease NS2, maybe by contributing to the folding of the latter (By similarity). The NTPase/helicase activity is located in the twothirds C-terminus of NS3, this domain contains the NTPase and RNA-binding regions (By similarity).</text>
</comment>
<comment type="domain">
    <molecule>Non-structural protein 4B</molecule>
    <text evidence="12">Contains a glycine zipper region that critically contributes to the biogenesis of functional ER-derived replication organelles.</text>
</comment>
<comment type="domain">
    <molecule>Non-structural protein 5A</molecule>
    <text evidence="3 6">The N-terminus of NS5A acts as membrane anchor (By similarity). The central part of NS5A contains a variable region called interferon sensitivity determining region (ISDR) and seems to be intrinsically disordered and interacts with NS5B and host EIF2AK2 (By similarity). The C-terminus of NS5A contains a variable region called variable region 3 (V3) (By similarity). ISDR and V3 may be involved in sensitivity and/or resistance to IFN-alpha therapy (By similarity). The C-terminus contains a nuclear localization signal (By similarity). The SH3-binding domain is involved in the interaction with host BIN1, GRB2 and Src-family kinases (By similarity).</text>
</comment>
<comment type="PTM">
    <molecule>Genome polyprotein</molecule>
    <text evidence="5 6">Specific enzymatic cleavages in vivo yield mature proteins (By similarity). The structural proteins, core, E1, E2 and p7 are produced by proteolytic processing by host signal peptidases (By similarity). The core protein precursor is synthesized as a 23 kDa, which is retained in the ER membrane through the hydrophobic signal peptide (By similarity). Cleavage by the signal peptidase releases the 21 kDa mature core protein (By similarity). The cleavage of the core protein precursor occurs between aminoacids 176 and 188 but the exact cleavage site is not known (By similarity). Some degraded forms of the core protein appear as well during the course of infection (By similarity). The other proteins (p7, NS2, NS3, NS4A, NS4B, NS5A and NS5B) are cleaved by the viral proteases (By similarity). Autoprocessing between NS2 and NS3 is mediated by the NS2 cysteine protease catalytic domain and regulated by the NS3 N-terminal domain (By similarity).</text>
</comment>
<comment type="PTM">
    <molecule>Mature core protein</molecule>
    <text evidence="8">Phosphorylated by host PKC and PKA.</text>
</comment>
<comment type="PTM">
    <molecule>Mature core protein</molecule>
    <text evidence="9">Ubiquitinated; mediated by UBE3A and leading to core protein subsequent proteasomal degradation.</text>
</comment>
<comment type="PTM">
    <molecule>Envelope glycoprotein E1</molecule>
    <text evidence="6">Highly N-glycosylated.</text>
</comment>
<comment type="PTM">
    <molecule>Envelope glycoprotein E2</molecule>
    <text evidence="6">Highly N-glycosylated.</text>
</comment>
<comment type="PTM">
    <molecule>Protease NS2</molecule>
    <text evidence="6">Palmitoylation is required for NS2/3 autoprocessing and E2 recruitment to membranes.</text>
</comment>
<comment type="PTM">
    <molecule>Non-structural protein 4B</molecule>
    <text evidence="6">Palmitoylated. This modification may play a role in its polymerization or in protein-protein interactions.</text>
</comment>
<comment type="PTM">
    <molecule>Non-structural protein 5A</molecule>
    <text evidence="3 5">Phosphorylated on serines in a basal form termed p56 (By similarity). p58 is a hyperphosphorylated form of p56 (By similarity). p56 and p58 coexist in the cell in roughly equivalent amounts (By similarity). Hyperphosphorylation is dependent on the presence of NS4A (By similarity). Host CSNK1A1/CKI-alpha or RPS6KB1 kinases may be responsible for NS5A phosphorylation (By similarity).</text>
</comment>
<comment type="PTM">
    <molecule>Non-structural protein 5A</molecule>
    <text evidence="12">Tyrosine phosphorylation is essential for the interaction with host SRC.</text>
</comment>
<comment type="PTM">
    <molecule>RNA-directed RNA polymerase</molecule>
    <text evidence="3">The N-terminus is phosphorylated by host PRK2/PKN2.</text>
</comment>
<comment type="miscellaneous">
    <text evidence="20">Viral particle assembly takes place at the surface of ER-derived membranes in close proximity to lipid droplets. NS2 associates with E1/E2 glycoproteins, NS3 and NS5A, which interacts with the viral RNA and core protein to promote genome encapsidation. The nucleocapsid buds at the ER membrane where E1/E2 glycoproteins are anchored and afterward associate with nascent lipid droplet to acquire APOE and APOC. Secretion of viral particles is probably regulated by viroporin p7.</text>
</comment>
<comment type="miscellaneous">
    <molecule>Non-structural protein 5A</molecule>
    <text evidence="20">Cell culture adaptation of the virus leads to mutations in NS5A, reducing its inhibitory effect on replication.</text>
</comment>
<comment type="miscellaneous">
    <molecule>Mature core protein</molecule>
    <text evidence="3">Exerts viral interference on hepatitis B virus when HCV and HBV coinfect the same cell, by suppressing HBV gene expression, RNA encapsidation and budding.</text>
</comment>
<comment type="similarity">
    <text evidence="20">Belongs to the hepacivirus polyprotein family.</text>
</comment>
<comment type="caution">
    <text evidence="20">The core gene probably also codes for alternative reading frame proteins (ARFPs). Many functions depicted for the core protein might belong to the ARFPs.</text>
</comment>
<proteinExistence type="inferred from homology"/>
<sequence>MSTLPKPQRKTKRNTNRRPMDVKFPGGGQIVGGVYLLPRRGPRLGVRATRKTSERSQPRGRRQPIPKARQPQGRHWAQPGYPWPLYGNEGCGWAGWLLSPRGSRPHWGPNDPRRRSRNLGKVIDTLTCGFADLMGYIPVVGAPLGGVAAALAHGVRAIEDGINYATGNLPGCSFSIFLLALLSCLTTPASALTYGNSSGLYHLTNDCPNSSIVLEADAMILHLPGCLPCVKVGNQSTCWHAVSPTLAIPNASTPATGFRRHVDLLAGAAVVCSSLYIGDLCGSLFLAGQLFTFQPRRHWTVQECNCSIYTGHVTGHRMAWDMMMSWSPTTTLVLSSILRVPEICASVIFGGHWGILLAVAYFGMAGNWLKVLAVLFLFAGVEATTTVGHGVARTTAGITGLFSPGASQNLQLIKNGSSWHINRTALNCNDSLQTGFLASLFYVRKFNSSGCPERMAVCKSLADFRQGWGQITYKVNISGPSDDRPYCWHYAPRPCDVVPASTVCGPVYCFTPSPVVIGTTDRRGNPTYTWGENETDVFMLESLRPPTGGWFGCTWMNSTGFTKTCGAPPCQIIPGDYNSSANELLCPTDCFRKHPEATYQRCGSGPWVTPRCLVDYPYRLWHYPCTVNFTVHKVRMFVGGIEHRFDAACNWTRGERCELHDRDRIEMSPLLFSTTQLAILPCSFSTMPALSTGLIHLHQNIVDVQYLYGVSSSVTSWVVKWEYIVLMFLVLADARICTCLWLMLLISNVEAAVERLVVLNAASAAGTAGWWWAVLFLCCVWYVKGRLVPACTYMALGMWPLLLTILALPHRAYAMDNEQAASLGAVGLLAITIFTITPTYKKLLTCFIWWNQYFLARAEAMVHEWVPDLRVRGGRDSIILLTCLLHPQLGFEVTKILLAILAPLYILQYSLLKVPYFVRAHILLRACLLVRRLAGGRYVQACLLRLGAWTGTFIYDHLAPLSDWASDGLRDLAVAVEPVIFSPMEKKIITWGADTAACGDILSGLPVSARLGNLVLLGPADDMQRGGWKLLAPITAYAQQTRGLVGTIVTSLTGRDKNEVEGEVQVVSTATQSFLATSINGVMWTVYHGAGSKTLAGPKGPVCQMYTNVDKDLVGWPSPPGARSLTPCTCGSSDLYLVTREADVIPARRRGDNRAALLSPRPISTLKGSSGGPVMCPSGHVVGLFRAAVCTRGVAKSLDFIPVENMETTMRSPSFTDNSTPPAVPQTYQVGYLHAPTGSGKSTRVPAAYASQGYKVLVLNPSVAATLSFGSYMRQAYGVEPNVRTGVRTVTTGGAITYSTYGKFLADGGCSGGAYDIIICDECHSTDPTTVLGIGTVLDQAETAGARLTVLATATPPGSITVPHPNITETALPTTGEIPFYGKAIPLEYIKGGRHLIFCHSKKKCDELAGKLKSLGLNAVAFYRGVDVSVIPTSGDVVICATDALMTGYTGDFDSVIDCNVAVTQVVDFSLDPTFSIETTTVPQDAVSRSQRRGRTGRGKPGVYRFVSQGERPSGMFDTVVLCEAYDTGCAWYELTPSETTVRLRAYMNTPGLPVCQDHLEFWEGVFTGLTHIDAHFLSQTKQGGENFAYLVAYQATVCARAKAPPPSWDTMWKCLIRLKPTLTGPTPLLYRLGAVQNEIITTHPITKYIMTCMSADLEVITSTWVLVGGVLAALAAYCLSVGCVVICGRITLTGKPAVVPDREILYQQFDEMEECSRHIPYLAEGQQIAEQFRQKVLGLLQASAKQAEELKPAVHSAWPRMEEFWRKHMWNFVSGIQYLAGLSTLPGNPAVASLMSFTASLTSPLRTSQTLLLNILGGWIAAQVAPPPASTAFVVSGLAGAAVGSIRLGRVLVDVLAGYGAGVSGALVAFKIMSGDCPTTEDMVNLLPALLSPGALVVGVVCAAILRRHVGPAEGANQWMNRLIAFASRGNHVSPTHYVPETDASKNVTQILTSLTITSLLRRLHQWVNEDTATPCATSWLRDVWDWVCTVLSDFKVWLQAKLFPRLPGIPFLSCQTGYRGVWAGDGVCHTTCTCGAVIAGHVKNGTMKITGPKTCSNTWHGTFPINATTTGPSTPRPAPNYQRALWRVSAEDYVEVRRLGDCHYVVGVTAEGLKCPCQVPAPEFFTEVDGVRIHRYAPPCKPLLRDEVTFSVGLSNYAIGSQLPCEPEPDVTVVTSMLTDPTHITAETASRRLKRGSPPSLASSSASQLSAPSLKATCTTSKDHPDMELIEANLLWRQEMGGNITRVESENKVVVLDSFEPLTAEYDEREISVSAECHRPPRHKFPPALPIWARPDYNPPLLQAWQMPGYEPPVVSGCAVAPPKPAPIPPPRRKRLVHLDESTVSRALAQLADKVFVEGSSDPGPSSDSGLSITSPDPPAPTTPDDACSEAESYSSMPPLEGEPGDPDLSSGSWSTVSDQDDVVCCSMSYSWTGALITPCAAEEEKLPINPLSNSLIRHHNMVYSTTSRSASLRQKKVTFDRLQVFDQHYQDVLKEIKLRASTVQARLLSIEEACDLTPSHSARSKYGYGAQDVRSHASKAINHIRSVWEDLLEDSDTPIPTTIMAKNEVFCVDPSKGGRKPARLIVYPDLGVRVCEKMALYDVTRKLPQAVMGSAYGFQYSPNQRVEYLLKMWRSKKVPMGFSYDTRCFDSTVTERDIRTENDIYQSCQLDPVARRAVSSLTERLYVGGPMVNSKGQSCGYRRCRASGVLPTSMGNTLTCYLKAQAACRAANIKDCDMLVCGDDLVVICESAGVQEDTASLRAFTDAMTRYSAPPGDVPQPTYDLELITSCSSNVSVAHDGNGKRYYYLTRDCTTPLARAAWETARHTPVNSWLGNIIMFAPTIWVRMVLMTHFFSILQSQEQLEKALDFDIYGVTYSVSPLDLPAIIQRLHGMAAFSLHGYSPTELNRVGACLRKLGVPPLRAWRHRARAVRAKLIAQGGKAAICGKYLFNWAVKTKLKLTPLVSASKLDLSGWFVAGYDGGDIYHSVSQARPRLLLLGLLLLTVGVGIFLVPAR</sequence>
<feature type="initiator methionine" description="Removed; by host" evidence="5">
    <location>
        <position position="1"/>
    </location>
</feature>
<feature type="chain" id="PRO_0000450896" description="Genome polyprotein">
    <location>
        <begin position="2"/>
        <end position="3019"/>
    </location>
</feature>
<feature type="chain" id="PRO_0000045508" description="Core protein precursor">
    <location>
        <begin position="2"/>
        <end position="191"/>
    </location>
</feature>
<feature type="chain" id="PRO_0000045509" description="Mature core protein">
    <location>
        <begin position="2"/>
        <end position="177"/>
    </location>
</feature>
<feature type="propeptide" id="PRO_0000045510" description="ER anchor for the core protein, removed in mature form by host signal peptidase">
    <location>
        <begin position="178"/>
        <end position="191"/>
    </location>
</feature>
<feature type="chain" id="PRO_0000045511" description="Envelope glycoprotein E1">
    <location>
        <begin position="192"/>
        <end position="383"/>
    </location>
</feature>
<feature type="chain" id="PRO_0000045512" description="Envelope glycoprotein E2">
    <location>
        <begin position="384"/>
        <end position="751"/>
    </location>
</feature>
<feature type="chain" id="PRO_0000045513" description="Viroporin p7">
    <location>
        <begin position="752"/>
        <end position="814"/>
    </location>
</feature>
<feature type="chain" id="PRO_0000045514" description="Protease NS2" evidence="17">
    <location>
        <begin position="815"/>
        <end position="1031"/>
    </location>
</feature>
<feature type="chain" id="PRO_0000045515" description="Serine protease/helicase NS3">
    <location>
        <begin position="1032"/>
        <end position="1662"/>
    </location>
</feature>
<feature type="chain" id="PRO_0000045516" description="Non-structural protein 4A">
    <location>
        <begin position="1663"/>
        <end position="1716"/>
    </location>
</feature>
<feature type="chain" id="PRO_0000045517" description="Non-structural protein 4B">
    <location>
        <begin position="1717"/>
        <end position="1977"/>
    </location>
</feature>
<feature type="chain" id="PRO_0000045518" description="Non-structural protein 5A">
    <location>
        <begin position="1978"/>
        <end position="2428"/>
    </location>
</feature>
<feature type="chain" id="PRO_0000045519" description="RNA-directed RNA polymerase">
    <location>
        <begin position="2429"/>
        <end position="3019"/>
    </location>
</feature>
<feature type="topological domain" description="Cytoplasmic" evidence="14">
    <location>
        <begin position="2"/>
        <end position="168"/>
    </location>
</feature>
<feature type="transmembrane region" description="Helical" evidence="14">
    <location>
        <begin position="169"/>
        <end position="189"/>
    </location>
</feature>
<feature type="topological domain" description="Lumenal" evidence="6">
    <location>
        <begin position="190"/>
        <end position="358"/>
    </location>
</feature>
<feature type="transmembrane region" description="Helical" evidence="6">
    <location>
        <begin position="359"/>
        <end position="379"/>
    </location>
</feature>
<feature type="topological domain" description="Lumenal" evidence="6">
    <location>
        <begin position="380"/>
        <end position="730"/>
    </location>
</feature>
<feature type="transmembrane region" description="Helical" evidence="6">
    <location>
        <begin position="731"/>
        <end position="751"/>
    </location>
</feature>
<feature type="topological domain" description="Lumenal" evidence="6">
    <location>
        <begin position="752"/>
        <end position="762"/>
    </location>
</feature>
<feature type="transmembrane region" description="Helical" evidence="6">
    <location>
        <begin position="763"/>
        <end position="783"/>
    </location>
</feature>
<feature type="topological domain" description="Cytoplasmic" evidence="6">
    <location>
        <begin position="784"/>
        <end position="786"/>
    </location>
</feature>
<feature type="transmembrane region" description="Helical" evidence="6">
    <location>
        <begin position="787"/>
        <end position="808"/>
    </location>
</feature>
<feature type="topological domain" description="Lumenal" evidence="6">
    <location>
        <begin position="809"/>
        <end position="818"/>
    </location>
</feature>
<feature type="transmembrane region" description="Helical" evidence="13">
    <location>
        <begin position="819"/>
        <end position="839"/>
    </location>
</feature>
<feature type="topological domain" description="Cytoplasmic" evidence="13">
    <location>
        <begin position="840"/>
        <end position="843"/>
    </location>
</feature>
<feature type="transmembrane region" description="Helical" evidence="13">
    <location>
        <begin position="844"/>
        <end position="863"/>
    </location>
</feature>
<feature type="topological domain" description="Lumenal" evidence="13">
    <location>
        <begin position="864"/>
        <end position="886"/>
    </location>
</feature>
<feature type="transmembrane region" description="Helical" evidence="13">
    <location>
        <begin position="887"/>
        <end position="907"/>
    </location>
</feature>
<feature type="topological domain" description="Cytoplasmic" evidence="13">
    <location>
        <begin position="908"/>
        <end position="1662"/>
    </location>
</feature>
<feature type="transmembrane region" description="Helical" evidence="14">
    <location>
        <begin position="1663"/>
        <end position="1683"/>
    </location>
</feature>
<feature type="topological domain" description="Cytoplasmic" evidence="14">
    <location>
        <begin position="1684"/>
        <end position="1810"/>
    </location>
</feature>
<feature type="transmembrane region" description="Helical" evidence="14">
    <location>
        <begin position="1811"/>
        <end position="1829"/>
    </location>
</feature>
<feature type="topological domain" description="Lumenal" evidence="6">
    <location>
        <begin position="1830"/>
        <end position="1833"/>
    </location>
</feature>
<feature type="transmembrane region" description="Helical" evidence="14">
    <location>
        <begin position="1834"/>
        <end position="1854"/>
    </location>
</feature>
<feature type="topological domain" description="Cytoplasmic" evidence="14">
    <location>
        <position position="1855"/>
    </location>
</feature>
<feature type="transmembrane region" description="Helical" evidence="14">
    <location>
        <begin position="1856"/>
        <end position="1876"/>
    </location>
</feature>
<feature type="topological domain" description="Lumenal" evidence="14">
    <location>
        <begin position="1877"/>
        <end position="1886"/>
    </location>
</feature>
<feature type="transmembrane region" description="Helical" evidence="14">
    <location>
        <begin position="1887"/>
        <end position="1907"/>
    </location>
</feature>
<feature type="topological domain" description="Cytoplasmic" evidence="14">
    <location>
        <begin position="1908"/>
        <end position="1977"/>
    </location>
</feature>
<feature type="intramembrane region" evidence="6">
    <location>
        <begin position="1978"/>
        <end position="2007"/>
    </location>
</feature>
<feature type="topological domain" description="Cytoplasmic" evidence="6">
    <location>
        <begin position="2008"/>
        <end position="2998"/>
    </location>
</feature>
<feature type="transmembrane region" description="Helical" evidence="6">
    <location>
        <begin position="2999"/>
        <end position="3019"/>
    </location>
</feature>
<feature type="domain" description="Peptidase C18" evidence="17">
    <location>
        <begin position="908"/>
        <end position="1031"/>
    </location>
</feature>
<feature type="domain" description="Peptidase S29" evidence="18">
    <location>
        <begin position="1032"/>
        <end position="1213"/>
    </location>
</feature>
<feature type="domain" description="Helicase ATP-binding" evidence="16">
    <location>
        <begin position="1222"/>
        <end position="1374"/>
    </location>
</feature>
<feature type="domain" description="RdRp catalytic" evidence="15">
    <location>
        <begin position="2642"/>
        <end position="2760"/>
    </location>
</feature>
<feature type="region of interest" description="Disordered" evidence="6">
    <location>
        <begin position="2"/>
        <end position="75"/>
    </location>
</feature>
<feature type="region of interest" description="Interaction with DDX3X" evidence="10">
    <location>
        <begin position="2"/>
        <end position="59"/>
    </location>
</feature>
<feature type="region of interest" description="Interaction with EIF2AK2/PKR" evidence="3">
    <location>
        <begin position="2"/>
        <end position="58"/>
    </location>
</feature>
<feature type="region of interest" description="Interaction with STAT1" evidence="3">
    <location>
        <begin position="2"/>
        <end position="23"/>
    </location>
</feature>
<feature type="region of interest" description="Important for endoplasmic reticulum and mitochondrial localization" evidence="3">
    <location>
        <begin position="112"/>
        <end position="152"/>
    </location>
</feature>
<feature type="region of interest" description="Interaction with APOA2" evidence="7">
    <location>
        <begin position="122"/>
        <end position="173"/>
    </location>
</feature>
<feature type="region of interest" description="Important for lipid droplets localization" evidence="6">
    <location>
        <begin position="164"/>
        <end position="167"/>
    </location>
</feature>
<feature type="region of interest" description="Important for fusion" evidence="6">
    <location>
        <begin position="265"/>
        <end position="296"/>
    </location>
</feature>
<feature type="region of interest" description="HVR1" evidence="6">
    <location>
        <begin position="385"/>
        <end position="411"/>
    </location>
</feature>
<feature type="region of interest" description="HVR2" evidence="6">
    <location>
        <begin position="474"/>
        <end position="479"/>
    </location>
</feature>
<feature type="region of interest" description="CD81-binding 1" evidence="4">
    <location>
        <begin position="481"/>
        <end position="494"/>
    </location>
</feature>
<feature type="region of interest" description="CD81-binding 2" evidence="4">
    <location>
        <begin position="545"/>
        <end position="552"/>
    </location>
</feature>
<feature type="region of interest" description="PKR/eIF2-alpha phosphorylation homology domain (PePHD)" evidence="1">
    <location>
        <begin position="665"/>
        <end position="676"/>
    </location>
</feature>
<feature type="region of interest" description="Protease NS2-3" evidence="4">
    <location>
        <begin position="909"/>
        <end position="1211"/>
    </location>
</feature>
<feature type="region of interest" description="Interaction with host SCPS1" evidence="12">
    <location>
        <begin position="934"/>
        <end position="954"/>
    </location>
</feature>
<feature type="region of interest" description="RNA-binding" evidence="4">
    <location>
        <begin position="1491"/>
        <end position="1503"/>
    </location>
</feature>
<feature type="region of interest" description="NS3-binding" evidence="6">
    <location>
        <begin position="1684"/>
        <end position="1695"/>
    </location>
</feature>
<feature type="region of interest" description="Transcriptional activation" evidence="14">
    <location>
        <begin position="2125"/>
        <end position="2338"/>
    </location>
</feature>
<feature type="region of interest" description="FKBP8-binding" evidence="3">
    <location>
        <begin position="2125"/>
        <end position="2213"/>
    </location>
</feature>
<feature type="region of interest" description="Interaction with non-structural protein 4A" evidence="3">
    <location>
        <begin position="2140"/>
        <end position="2144"/>
    </location>
</feature>
<feature type="region of interest" description="Disordered" evidence="19">
    <location>
        <begin position="2189"/>
        <end position="2223"/>
    </location>
</feature>
<feature type="region of interest" description="Interaction with host SKP2" evidence="6">
    <location>
        <begin position="2194"/>
        <end position="2446"/>
    </location>
</feature>
<feature type="region of interest" description="Interaction with EIF2AK2/PKR" evidence="4">
    <location>
        <begin position="2215"/>
        <end position="2280"/>
    </location>
</feature>
<feature type="region of interest" description="ISDR" evidence="3">
    <location>
        <begin position="2215"/>
        <end position="2254"/>
    </location>
</feature>
<feature type="region of interest" description="NS4B-binding" evidence="14">
    <location>
        <begin position="2254"/>
        <end position="2312"/>
    </location>
</feature>
<feature type="region of interest" description="V3" evidence="1">
    <location>
        <begin position="2305"/>
        <end position="2383"/>
    </location>
</feature>
<feature type="region of interest" description="Disordered" evidence="19">
    <location>
        <begin position="2359"/>
        <end position="2418"/>
    </location>
</feature>
<feature type="short sequence motif" description="Nuclear localization signal" evidence="12">
    <location>
        <begin position="5"/>
        <end position="13"/>
    </location>
</feature>
<feature type="short sequence motif" description="Nuclear localization signal" evidence="12">
    <location>
        <begin position="38"/>
        <end position="43"/>
    </location>
</feature>
<feature type="short sequence motif" description="Nuclear localization signal" evidence="12">
    <location>
        <begin position="58"/>
        <end position="64"/>
    </location>
</feature>
<feature type="short sequence motif" description="Nuclear localization signal" evidence="12">
    <location>
        <begin position="66"/>
        <end position="71"/>
    </location>
</feature>
<feature type="short sequence motif" description="DECH box" evidence="12">
    <location>
        <begin position="1321"/>
        <end position="1324"/>
    </location>
</feature>
<feature type="short sequence motif" description="SH3-binding" evidence="14">
    <location>
        <begin position="2328"/>
        <end position="2331"/>
    </location>
</feature>
<feature type="short sequence motif" description="Nuclear localization signal" evidence="3">
    <location>
        <begin position="2333"/>
        <end position="2341"/>
    </location>
</feature>
<feature type="compositionally biased region" description="Basic residues" evidence="19">
    <location>
        <begin position="7"/>
        <end position="16"/>
    </location>
</feature>
<feature type="compositionally biased region" description="Low complexity" evidence="19">
    <location>
        <begin position="32"/>
        <end position="47"/>
    </location>
</feature>
<feature type="compositionally biased region" description="Low complexity" evidence="19">
    <location>
        <begin position="2199"/>
        <end position="2216"/>
    </location>
</feature>
<feature type="compositionally biased region" description="Low complexity" evidence="19">
    <location>
        <begin position="2361"/>
        <end position="2372"/>
    </location>
</feature>
<feature type="active site" description="For protease NS2 activity; shared with dimeric partner" evidence="17">
    <location>
        <position position="957"/>
    </location>
</feature>
<feature type="active site" description="For protease NS2 activity; shared with dimeric partner" evidence="17">
    <location>
        <position position="977"/>
    </location>
</feature>
<feature type="active site" description="For protease NS2 activity; shared with dimeric partner" evidence="17">
    <location>
        <position position="998"/>
    </location>
</feature>
<feature type="active site" description="Charge relay system; for serine protease NS3 activity" evidence="18">
    <location>
        <position position="1088"/>
    </location>
</feature>
<feature type="active site" description="Charge relay system; for serine protease NS3 activity" evidence="18">
    <location>
        <position position="1112"/>
    </location>
</feature>
<feature type="active site" description="Charge relay system; for serine protease NS3 activity" evidence="18">
    <location>
        <position position="1170"/>
    </location>
</feature>
<feature type="binding site" evidence="18">
    <location>
        <position position="1128"/>
    </location>
    <ligand>
        <name>Zn(2+)</name>
        <dbReference type="ChEBI" id="CHEBI:29105"/>
        <label>1</label>
        <note>structural; for NS3 protease activity and NS2/3 auto-cleavage activity</note>
    </ligand>
</feature>
<feature type="binding site" evidence="18">
    <location>
        <position position="1130"/>
    </location>
    <ligand>
        <name>Zn(2+)</name>
        <dbReference type="ChEBI" id="CHEBI:29105"/>
        <label>1</label>
        <note>structural; for NS3 protease activity and NS2/3 auto-cleavage activity</note>
    </ligand>
</feature>
<feature type="binding site" evidence="18">
    <location>
        <position position="1176"/>
    </location>
    <ligand>
        <name>Zn(2+)</name>
        <dbReference type="ChEBI" id="CHEBI:29105"/>
        <label>1</label>
        <note>structural; for NS3 protease activity and NS2/3 auto-cleavage activity</note>
    </ligand>
</feature>
<feature type="binding site" evidence="18">
    <location>
        <position position="1180"/>
    </location>
    <ligand>
        <name>Zn(2+)</name>
        <dbReference type="ChEBI" id="CHEBI:29105"/>
        <label>1</label>
        <note>structural; for NS3 protease activity and NS2/3 auto-cleavage activity</note>
    </ligand>
</feature>
<feature type="binding site" evidence="16">
    <location>
        <begin position="1235"/>
        <end position="1242"/>
    </location>
    <ligand>
        <name>ATP</name>
        <dbReference type="ChEBI" id="CHEBI:30616"/>
    </ligand>
</feature>
<feature type="binding site" evidence="13">
    <location>
        <position position="1242"/>
    </location>
    <ligand>
        <name>Mg(2+)</name>
        <dbReference type="ChEBI" id="CHEBI:18420"/>
        <label>1</label>
        <note>catalytic; for NS3 helicase activity</note>
    </ligand>
</feature>
<feature type="binding site" evidence="13">
    <location>
        <position position="1322"/>
    </location>
    <ligand>
        <name>Mg(2+)</name>
        <dbReference type="ChEBI" id="CHEBI:18420"/>
        <label>1</label>
        <note>catalytic; for NS3 helicase activity</note>
    </ligand>
</feature>
<feature type="binding site" evidence="13">
    <location>
        <position position="2016"/>
    </location>
    <ligand>
        <name>Zn(2+)</name>
        <dbReference type="ChEBI" id="CHEBI:29105"/>
        <label>2</label>
        <note>structural</note>
    </ligand>
</feature>
<feature type="binding site" evidence="13">
    <location>
        <position position="2034"/>
    </location>
    <ligand>
        <name>Zn(2+)</name>
        <dbReference type="ChEBI" id="CHEBI:29105"/>
        <label>2</label>
        <note>structural</note>
    </ligand>
</feature>
<feature type="binding site" evidence="13">
    <location>
        <position position="2036"/>
    </location>
    <ligand>
        <name>Zn(2+)</name>
        <dbReference type="ChEBI" id="CHEBI:29105"/>
        <label>2</label>
        <note>structural</note>
    </ligand>
</feature>
<feature type="binding site" evidence="13">
    <location>
        <position position="2057"/>
    </location>
    <ligand>
        <name>Zn(2+)</name>
        <dbReference type="ChEBI" id="CHEBI:29105"/>
        <label>2</label>
        <note>structural</note>
    </ligand>
</feature>
<feature type="binding site" evidence="4">
    <location>
        <position position="2648"/>
    </location>
    <ligand>
        <name>Mg(2+)</name>
        <dbReference type="ChEBI" id="CHEBI:18420"/>
        <label>2</label>
        <note>catalytic; for RNA-directed RNA polymerase activity</note>
    </ligand>
</feature>
<feature type="binding site" evidence="4">
    <location>
        <position position="2746"/>
    </location>
    <ligand>
        <name>Mg(2+)</name>
        <dbReference type="ChEBI" id="CHEBI:18420"/>
        <label>2</label>
        <note>catalytic; for RNA-directed RNA polymerase activity</note>
    </ligand>
</feature>
<feature type="binding site" evidence="4">
    <location>
        <position position="2747"/>
    </location>
    <ligand>
        <name>Mg(2+)</name>
        <dbReference type="ChEBI" id="CHEBI:18420"/>
        <label>2</label>
        <note>catalytic; for RNA-directed RNA polymerase activity</note>
    </ligand>
</feature>
<feature type="site" description="Cleavage; by host signal peptide peptidase" evidence="3">
    <location>
        <begin position="177"/>
        <end position="178"/>
    </location>
</feature>
<feature type="site" description="Cleavage; by host signal peptidase" evidence="3">
    <location>
        <begin position="191"/>
        <end position="192"/>
    </location>
</feature>
<feature type="site" description="Cleavage; by host signal peptidase" evidence="3">
    <location>
        <begin position="383"/>
        <end position="384"/>
    </location>
</feature>
<feature type="site" description="Cleavage; by host signal peptidase" evidence="1">
    <location>
        <begin position="751"/>
        <end position="752"/>
    </location>
</feature>
<feature type="site" description="Cleavage; by host signal peptidase" evidence="1">
    <location>
        <begin position="814"/>
        <end position="815"/>
    </location>
</feature>
<feature type="site" description="Cleavage; by protease NS2" evidence="17">
    <location>
        <begin position="1031"/>
        <end position="1032"/>
    </location>
</feature>
<feature type="site" description="Cleavage; by serine protease NS3" evidence="6">
    <location>
        <begin position="1662"/>
        <end position="1663"/>
    </location>
</feature>
<feature type="site" description="Cleavage; by serine protease NS3" evidence="6">
    <location>
        <begin position="1716"/>
        <end position="1717"/>
    </location>
</feature>
<feature type="site" description="Cleavage; by serine protease NS3" evidence="6">
    <location>
        <begin position="1977"/>
        <end position="1978"/>
    </location>
</feature>
<feature type="site" description="Cleavage; by serine protease NS3" evidence="6">
    <location>
        <begin position="2428"/>
        <end position="2429"/>
    </location>
</feature>
<feature type="modified residue" description="N-acetylserine; by host" evidence="11">
    <location>
        <position position="2"/>
    </location>
</feature>
<feature type="modified residue" description="Phosphoserine; by host" evidence="8">
    <location>
        <position position="53"/>
    </location>
</feature>
<feature type="modified residue" description="Phosphoserine; by host" evidence="8">
    <location>
        <position position="99"/>
    </location>
</feature>
<feature type="modified residue" description="Phosphoserine; by host PKA" evidence="8">
    <location>
        <position position="116"/>
    </location>
</feature>
<feature type="modified residue" description="Phosphoserine; by host; in p56" evidence="13">
    <location>
        <position position="2199"/>
    </location>
</feature>
<feature type="modified residue" description="Phosphoserine; by host; in p58" evidence="13">
    <location>
        <position position="2202"/>
    </location>
</feature>
<feature type="modified residue" description="Phosphoserine; by host; in p58" evidence="13">
    <location>
        <position position="2206"/>
    </location>
</feature>
<feature type="modified residue" description="Phosphoserine; by host; in p58" evidence="13">
    <location>
        <position position="2209"/>
    </location>
</feature>
<feature type="modified residue" description="Phosphoserine; by host; in p58" evidence="12">
    <location>
        <position position="2212"/>
    </location>
</feature>
<feature type="modified residue" description="Phosphoserine; by host; in p58" evidence="12">
    <location>
        <position position="2215"/>
    </location>
</feature>
<feature type="modified residue" description="Phosphoserine; by host" evidence="3">
    <location>
        <position position="2457"/>
    </location>
</feature>
<feature type="modified residue" description="Phosphoserine; by host" evidence="3">
    <location>
        <position position="2470"/>
    </location>
</feature>
<feature type="lipid moiety-binding region" description="S-palmitoyl cysteine; by host" evidence="6">
    <location>
        <position position="927"/>
    </location>
</feature>
<feature type="lipid moiety-binding region" description="S-palmitoyl cysteine; by host" evidence="6">
    <location>
        <position position="1977"/>
    </location>
</feature>
<feature type="glycosylation site" description="N-linked (GlcNAc...) asparagine; by host" evidence="6">
    <location>
        <position position="196"/>
    </location>
</feature>
<feature type="glycosylation site" description="N-linked (GlcNAc...) asparagine; by host" evidence="6">
    <location>
        <position position="209"/>
    </location>
</feature>
<feature type="glycosylation site" description="N-linked (GlcNAc...) asparagine; by host" evidence="6">
    <location>
        <position position="234"/>
    </location>
</feature>
<feature type="glycosylation site" description="N-linked (GlcNAc...) asparagine; by host" evidence="14">
    <location>
        <position position="250"/>
    </location>
</feature>
<feature type="glycosylation site" description="N-linked (GlcNAc...) asparagine; by host" evidence="6">
    <location>
        <position position="305"/>
    </location>
</feature>
<feature type="glycosylation site" description="N-linked (GlcNAc...) asparagine; by host" evidence="14">
    <location>
        <position position="415"/>
    </location>
</feature>
<feature type="glycosylation site" description="N-linked (GlcNAc...) (high mannose) asparagine; by host" evidence="6">
    <location>
        <position position="422"/>
    </location>
</feature>
<feature type="glycosylation site" description="N-linked (GlcNAc...) (high mannose) asparagine; by host" evidence="6">
    <location>
        <position position="429"/>
    </location>
</feature>
<feature type="glycosylation site" description="N-linked (GlcNAc...) asparagine; by host" evidence="14">
    <location>
        <position position="447"/>
    </location>
</feature>
<feature type="glycosylation site" description="N-linked (GlcNAc...) asparagine; by host" evidence="14">
    <location>
        <position position="476"/>
    </location>
</feature>
<feature type="glycosylation site" description="N-linked (GlcNAc...) asparagine; by host" evidence="14">
    <location>
        <position position="533"/>
    </location>
</feature>
<feature type="glycosylation site" description="N-linked (GlcNAc...) asparagine; by host" evidence="14">
    <location>
        <position position="557"/>
    </location>
</feature>
<feature type="glycosylation site" description="N-linked (GlcNAc...) asparagine; by host" evidence="14">
    <location>
        <position position="578"/>
    </location>
</feature>
<feature type="glycosylation site" description="N-linked (GlcNAc...) (high mannose) asparagine; by host" evidence="6">
    <location>
        <position position="628"/>
    </location>
</feature>
<feature type="glycosylation site" description="N-linked (GlcNAc...) (high mannose) asparagine; by host" evidence="6">
    <location>
        <position position="650"/>
    </location>
</feature>
<feature type="disulfide bond" evidence="6">
    <location>
        <begin position="428"/>
        <end position="553"/>
    </location>
</feature>
<feature type="disulfide bond" evidence="6">
    <location>
        <begin position="451"/>
        <end position="458"/>
    </location>
</feature>
<feature type="disulfide bond" evidence="6">
    <location>
        <begin position="487"/>
        <end position="495"/>
    </location>
</feature>
<feature type="disulfide bond" evidence="6">
    <location>
        <begin position="504"/>
        <end position="509"/>
    </location>
</feature>
<feature type="disulfide bond" evidence="6">
    <location>
        <begin position="565"/>
        <end position="570"/>
    </location>
</feature>
<feature type="disulfide bond" evidence="6">
    <location>
        <begin position="586"/>
        <end position="590"/>
    </location>
</feature>
<feature type="disulfide bond" evidence="6">
    <location>
        <begin position="602"/>
        <end position="625"/>
    </location>
</feature>
<feature type="disulfide bond" evidence="6">
    <location>
        <begin position="612"/>
        <end position="649"/>
    </location>
</feature>
<feature type="disulfide bond" evidence="6">
    <location>
        <begin position="657"/>
        <end position="682"/>
    </location>
</feature>
<feature type="cross-link" description="Glycyl lysine isopeptide (Lys-Gly) (interchain with G-Cter in ubiquitin)" evidence="6">
    <location>
        <position position="2356"/>
    </location>
</feature>
<keyword id="KW-0007">Acetylation</keyword>
<keyword id="KW-1072">Activation of host autophagy by virus</keyword>
<keyword id="KW-0053">Apoptosis</keyword>
<keyword id="KW-0067">ATP-binding</keyword>
<keyword id="KW-0167">Capsid protein</keyword>
<keyword id="KW-1165">Clathrin-mediated endocytosis of virus by host</keyword>
<keyword id="KW-1015">Disulfide bond</keyword>
<keyword id="KW-1170">Fusion of virus membrane with host endosomal membrane</keyword>
<keyword id="KW-1168">Fusion of virus membrane with host membrane</keyword>
<keyword id="KW-1078">G1/S host cell cycle checkpoint dysregulation by virus</keyword>
<keyword id="KW-0325">Glycoprotein</keyword>
<keyword id="KW-0347">Helicase</keyword>
<keyword id="KW-1032">Host cell membrane</keyword>
<keyword id="KW-1035">Host cytoplasm</keyword>
<keyword id="KW-1038">Host endoplasmic reticulum</keyword>
<keyword id="KW-1041">Host lipid droplet</keyword>
<keyword id="KW-1043">Host membrane</keyword>
<keyword id="KW-1045">Host mitochondrion</keyword>
<keyword id="KW-1048">Host nucleus</keyword>
<keyword id="KW-0945">Host-virus interaction</keyword>
<keyword id="KW-0378">Hydrolase</keyword>
<keyword id="KW-1090">Inhibition of host innate immune response by virus</keyword>
<keyword id="KW-1114">Inhibition of host interferon signaling pathway by virus</keyword>
<keyword id="KW-1097">Inhibition of host MAVS by virus</keyword>
<keyword id="KW-1113">Inhibition of host RLR pathway by virus</keyword>
<keyword id="KW-1105">Inhibition of host STAT1 by virus</keyword>
<keyword id="KW-1110">Inhibition of host TRAFs by virus</keyword>
<keyword id="KW-0922">Interferon antiviral system evasion</keyword>
<keyword id="KW-0407">Ion channel</keyword>
<keyword id="KW-0406">Ion transport</keyword>
<keyword id="KW-1017">Isopeptide bond</keyword>
<keyword id="KW-0449">Lipoprotein</keyword>
<keyword id="KW-0460">Magnesium</keyword>
<keyword id="KW-0472">Membrane</keyword>
<keyword id="KW-0479">Metal-binding</keyword>
<keyword id="KW-1121">Modulation of host cell cycle by virus</keyword>
<keyword id="KW-0511">Multifunctional enzyme</keyword>
<keyword id="KW-0547">Nucleotide-binding</keyword>
<keyword id="KW-0548">Nucleotidyltransferase</keyword>
<keyword id="KW-0553">Oncogene</keyword>
<keyword id="KW-0564">Palmitate</keyword>
<keyword id="KW-0597">Phosphoprotein</keyword>
<keyword id="KW-0645">Protease</keyword>
<keyword id="KW-0687">Ribonucleoprotein</keyword>
<keyword id="KW-0694">RNA-binding</keyword>
<keyword id="KW-0696">RNA-directed RNA polymerase</keyword>
<keyword id="KW-0720">Serine protease</keyword>
<keyword id="KW-0729">SH3-binding</keyword>
<keyword id="KW-0788">Thiol protease</keyword>
<keyword id="KW-0804">Transcription</keyword>
<keyword id="KW-0805">Transcription regulation</keyword>
<keyword id="KW-0808">Transferase</keyword>
<keyword id="KW-0812">Transmembrane</keyword>
<keyword id="KW-1133">Transmembrane helix</keyword>
<keyword id="KW-0813">Transport</keyword>
<keyword id="KW-0832">Ubl conjugation</keyword>
<keyword id="KW-1161">Viral attachment to host cell</keyword>
<keyword id="KW-0261">Viral envelope protein</keyword>
<keyword id="KW-0899">Viral immunoevasion</keyword>
<keyword id="KW-1182">Viral ion channel</keyword>
<keyword id="KW-0543">Viral nucleoprotein</keyword>
<keyword id="KW-1162">Viral penetration into host cytoplasm</keyword>
<keyword id="KW-0693">Viral RNA replication</keyword>
<keyword id="KW-0946">Virion</keyword>
<keyword id="KW-1164">Virus endocytosis by host</keyword>
<keyword id="KW-1160">Virus entry into host cell</keyword>
<keyword id="KW-0862">Zinc</keyword>
<accession>Q5I2N3</accession>
<reference key="1">
    <citation type="submission" date="2004-12" db="EMBL/GenBank/DDBJ databases">
        <title>Full genome sequence of HCV 6a virus strains isolated in Hong Kong.</title>
        <authorList>
            <person name="Zhou X.M."/>
            <person name="Chan P.K.S."/>
            <person name="Tam J.S.L."/>
        </authorList>
    </citation>
    <scope>NUCLEOTIDE SEQUENCE [GENOMIC RNA]</scope>
</reference>
<reference key="2">
    <citation type="journal article" date="2000" name="J. Viral Hepat.">
        <title>Properties of the hepatitis C virus core protein: a structural protein that modulates cellular processes.</title>
        <authorList>
            <person name="McLauchlan J."/>
        </authorList>
    </citation>
    <scope>REVIEW</scope>
</reference>
<reference key="3">
    <citation type="journal article" date="2004" name="Hepatology">
        <title>Structural biology of hepatitis C virus.</title>
        <authorList>
            <person name="Penin F."/>
            <person name="Dubuisson J."/>
            <person name="Rey F.A."/>
            <person name="Moradpour D."/>
            <person name="Pawlotsky J.-M."/>
        </authorList>
    </citation>
    <scope>REVIEW</scope>
</reference>
<organism>
    <name type="scientific">Hepatitis C virus genotype 6a (isolate 6a33)</name>
    <name type="common">HCV</name>
    <dbReference type="NCBI Taxonomy" id="356391"/>
    <lineage>
        <taxon>Viruses</taxon>
        <taxon>Riboviria</taxon>
        <taxon>Orthornavirae</taxon>
        <taxon>Kitrinoviricota</taxon>
        <taxon>Flasuviricetes</taxon>
        <taxon>Amarillovirales</taxon>
        <taxon>Flaviviridae</taxon>
        <taxon>Hepacivirus</taxon>
        <taxon>Hepacivirus hominis</taxon>
    </lineage>
</organism>
<dbReference type="EC" id="3.4.22.-" evidence="4"/>
<dbReference type="EC" id="3.4.21.98" evidence="6"/>
<dbReference type="EC" id="3.6.1.15" evidence="6"/>
<dbReference type="EC" id="3.6.4.13" evidence="6"/>
<dbReference type="EC" id="2.7.7.48" evidence="6"/>
<dbReference type="EMBL" id="AY859526">
    <property type="protein sequence ID" value="AAW56714.1"/>
    <property type="molecule type" value="Genomic_RNA"/>
</dbReference>
<dbReference type="SMR" id="Q5I2N3"/>
<dbReference type="DrugCentral" id="Q5I2N3"/>
<dbReference type="MEROPS" id="S29.001"/>
<dbReference type="euHCVdb" id="AY859526"/>
<dbReference type="Proteomes" id="UP000007411">
    <property type="component" value="Genome"/>
</dbReference>
<dbReference type="GO" id="GO:0044167">
    <property type="term" value="C:host cell endoplasmic reticulum membrane"/>
    <property type="evidence" value="ECO:0007669"/>
    <property type="project" value="UniProtKB-SubCell"/>
</dbReference>
<dbReference type="GO" id="GO:0044186">
    <property type="term" value="C:host cell lipid droplet"/>
    <property type="evidence" value="ECO:0007669"/>
    <property type="project" value="UniProtKB-SubCell"/>
</dbReference>
<dbReference type="GO" id="GO:0044191">
    <property type="term" value="C:host cell mitochondrial membrane"/>
    <property type="evidence" value="ECO:0007669"/>
    <property type="project" value="UniProtKB-SubCell"/>
</dbReference>
<dbReference type="GO" id="GO:0042025">
    <property type="term" value="C:host cell nucleus"/>
    <property type="evidence" value="ECO:0007669"/>
    <property type="project" value="UniProtKB-SubCell"/>
</dbReference>
<dbReference type="GO" id="GO:0044220">
    <property type="term" value="C:host cell perinuclear region of cytoplasm"/>
    <property type="evidence" value="ECO:0007669"/>
    <property type="project" value="UniProtKB-SubCell"/>
</dbReference>
<dbReference type="GO" id="GO:0020002">
    <property type="term" value="C:host cell plasma membrane"/>
    <property type="evidence" value="ECO:0007669"/>
    <property type="project" value="UniProtKB-SubCell"/>
</dbReference>
<dbReference type="GO" id="GO:0016020">
    <property type="term" value="C:membrane"/>
    <property type="evidence" value="ECO:0007669"/>
    <property type="project" value="UniProtKB-KW"/>
</dbReference>
<dbReference type="GO" id="GO:1990904">
    <property type="term" value="C:ribonucleoprotein complex"/>
    <property type="evidence" value="ECO:0007669"/>
    <property type="project" value="UniProtKB-KW"/>
</dbReference>
<dbReference type="GO" id="GO:0019031">
    <property type="term" value="C:viral envelope"/>
    <property type="evidence" value="ECO:0007669"/>
    <property type="project" value="UniProtKB-KW"/>
</dbReference>
<dbReference type="GO" id="GO:0019013">
    <property type="term" value="C:viral nucleocapsid"/>
    <property type="evidence" value="ECO:0007669"/>
    <property type="project" value="UniProtKB-KW"/>
</dbReference>
<dbReference type="GO" id="GO:0055036">
    <property type="term" value="C:virion membrane"/>
    <property type="evidence" value="ECO:0007669"/>
    <property type="project" value="UniProtKB-SubCell"/>
</dbReference>
<dbReference type="GO" id="GO:0005524">
    <property type="term" value="F:ATP binding"/>
    <property type="evidence" value="ECO:0007669"/>
    <property type="project" value="UniProtKB-KW"/>
</dbReference>
<dbReference type="GO" id="GO:0016887">
    <property type="term" value="F:ATP hydrolysis activity"/>
    <property type="evidence" value="ECO:0007669"/>
    <property type="project" value="RHEA"/>
</dbReference>
<dbReference type="GO" id="GO:0015267">
    <property type="term" value="F:channel activity"/>
    <property type="evidence" value="ECO:0007669"/>
    <property type="project" value="UniProtKB-KW"/>
</dbReference>
<dbReference type="GO" id="GO:0004197">
    <property type="term" value="F:cysteine-type endopeptidase activity"/>
    <property type="evidence" value="ECO:0007669"/>
    <property type="project" value="InterPro"/>
</dbReference>
<dbReference type="GO" id="GO:0003723">
    <property type="term" value="F:RNA binding"/>
    <property type="evidence" value="ECO:0007669"/>
    <property type="project" value="UniProtKB-KW"/>
</dbReference>
<dbReference type="GO" id="GO:0003724">
    <property type="term" value="F:RNA helicase activity"/>
    <property type="evidence" value="ECO:0007669"/>
    <property type="project" value="UniProtKB-EC"/>
</dbReference>
<dbReference type="GO" id="GO:0003968">
    <property type="term" value="F:RNA-directed RNA polymerase activity"/>
    <property type="evidence" value="ECO:0007669"/>
    <property type="project" value="UniProtKB-KW"/>
</dbReference>
<dbReference type="GO" id="GO:0004252">
    <property type="term" value="F:serine-type endopeptidase activity"/>
    <property type="evidence" value="ECO:0007669"/>
    <property type="project" value="InterPro"/>
</dbReference>
<dbReference type="GO" id="GO:0017124">
    <property type="term" value="F:SH3 domain binding"/>
    <property type="evidence" value="ECO:0007669"/>
    <property type="project" value="UniProtKB-KW"/>
</dbReference>
<dbReference type="GO" id="GO:0005198">
    <property type="term" value="F:structural molecule activity"/>
    <property type="evidence" value="ECO:0007669"/>
    <property type="project" value="InterPro"/>
</dbReference>
<dbReference type="GO" id="GO:0008270">
    <property type="term" value="F:zinc ion binding"/>
    <property type="evidence" value="ECO:0007669"/>
    <property type="project" value="InterPro"/>
</dbReference>
<dbReference type="GO" id="GO:0075512">
    <property type="term" value="P:clathrin-dependent endocytosis of virus by host cell"/>
    <property type="evidence" value="ECO:0007669"/>
    <property type="project" value="UniProtKB-KW"/>
</dbReference>
<dbReference type="GO" id="GO:0039654">
    <property type="term" value="P:fusion of virus membrane with host endosome membrane"/>
    <property type="evidence" value="ECO:0007669"/>
    <property type="project" value="UniProtKB-KW"/>
</dbReference>
<dbReference type="GO" id="GO:0034220">
    <property type="term" value="P:monoatomic ion transmembrane transport"/>
    <property type="evidence" value="ECO:0007669"/>
    <property type="project" value="UniProtKB-KW"/>
</dbReference>
<dbReference type="GO" id="GO:0006508">
    <property type="term" value="P:proteolysis"/>
    <property type="evidence" value="ECO:0007669"/>
    <property type="project" value="UniProtKB-KW"/>
</dbReference>
<dbReference type="GO" id="GO:0039520">
    <property type="term" value="P:symbiont-mediated activation of host autophagy"/>
    <property type="evidence" value="ECO:0007669"/>
    <property type="project" value="UniProtKB-KW"/>
</dbReference>
<dbReference type="GO" id="GO:0039645">
    <property type="term" value="P:symbiont-mediated perturbation of host cell cycle G1/S transition checkpoint"/>
    <property type="evidence" value="ECO:0007669"/>
    <property type="project" value="UniProtKB-KW"/>
</dbReference>
<dbReference type="GO" id="GO:0039545">
    <property type="term" value="P:symbiont-mediated suppression of host cytoplasmic pattern recognition receptor signaling pathway via inhibition of MAVS activity"/>
    <property type="evidence" value="ECO:0007669"/>
    <property type="project" value="UniProtKB-KW"/>
</dbReference>
<dbReference type="GO" id="GO:0039563">
    <property type="term" value="P:symbiont-mediated suppression of host JAK-STAT cascade via inhibition of STAT1 activity"/>
    <property type="evidence" value="ECO:0007669"/>
    <property type="project" value="UniProtKB-KW"/>
</dbReference>
<dbReference type="GO" id="GO:0039527">
    <property type="term" value="P:symbiont-mediated suppression of host TRAF-mediated signal transduction"/>
    <property type="evidence" value="ECO:0007669"/>
    <property type="project" value="UniProtKB-KW"/>
</dbReference>
<dbReference type="GO" id="GO:0039502">
    <property type="term" value="P:symbiont-mediated suppression of host type I interferon-mediated signaling pathway"/>
    <property type="evidence" value="ECO:0007669"/>
    <property type="project" value="UniProtKB-KW"/>
</dbReference>
<dbReference type="GO" id="GO:0019087">
    <property type="term" value="P:symbiont-mediated transformation of host cell"/>
    <property type="evidence" value="ECO:0007669"/>
    <property type="project" value="InterPro"/>
</dbReference>
<dbReference type="GO" id="GO:0039694">
    <property type="term" value="P:viral RNA genome replication"/>
    <property type="evidence" value="ECO:0007669"/>
    <property type="project" value="InterPro"/>
</dbReference>
<dbReference type="GO" id="GO:0019062">
    <property type="term" value="P:virion attachment to host cell"/>
    <property type="evidence" value="ECO:0007669"/>
    <property type="project" value="UniProtKB-KW"/>
</dbReference>
<dbReference type="CDD" id="cd20903">
    <property type="entry name" value="HCV_p7"/>
    <property type="match status" value="1"/>
</dbReference>
<dbReference type="CDD" id="cd23202">
    <property type="entry name" value="Hepacivirus_RdRp"/>
    <property type="match status" value="1"/>
</dbReference>
<dbReference type="FunFam" id="2.40.10.10:FF:000029">
    <property type="entry name" value="Genome polyprotein"/>
    <property type="match status" value="1"/>
</dbReference>
<dbReference type="FunFam" id="2.40.10.120:FF:000003">
    <property type="entry name" value="Genome polyprotein"/>
    <property type="match status" value="1"/>
</dbReference>
<dbReference type="FunFam" id="3.30.160.890:FF:000001">
    <property type="entry name" value="Genome polyprotein"/>
    <property type="match status" value="1"/>
</dbReference>
<dbReference type="FunFam" id="3.30.70.270:FF:000015">
    <property type="entry name" value="Genome polyprotein"/>
    <property type="match status" value="1"/>
</dbReference>
<dbReference type="FunFam" id="3.40.50.300:FF:000557">
    <property type="entry name" value="Genome polyprotein"/>
    <property type="match status" value="1"/>
</dbReference>
<dbReference type="FunFam" id="3.40.50.300:FF:000717">
    <property type="entry name" value="Genome polyprotein"/>
    <property type="match status" value="1"/>
</dbReference>
<dbReference type="Gene3D" id="2.40.10.120">
    <property type="match status" value="1"/>
</dbReference>
<dbReference type="Gene3D" id="3.30.70.270">
    <property type="match status" value="2"/>
</dbReference>
<dbReference type="Gene3D" id="6.10.250.1610">
    <property type="match status" value="1"/>
</dbReference>
<dbReference type="Gene3D" id="6.10.250.1750">
    <property type="match status" value="1"/>
</dbReference>
<dbReference type="Gene3D" id="6.10.250.2920">
    <property type="match status" value="1"/>
</dbReference>
<dbReference type="Gene3D" id="2.20.25.210">
    <property type="entry name" value="Hepatitis C NS5A, domain 1B"/>
    <property type="match status" value="1"/>
</dbReference>
<dbReference type="Gene3D" id="4.10.710.10">
    <property type="entry name" value="Hepatitis C Virus Capsid Protein, Chain A"/>
    <property type="match status" value="1"/>
</dbReference>
<dbReference type="Gene3D" id="3.30.160.890">
    <property type="entry name" value="Hepatitis C virus envelope glycoprotein E1, chain C"/>
    <property type="match status" value="1"/>
</dbReference>
<dbReference type="Gene3D" id="2.30.30.710">
    <property type="entry name" value="Hepatitis C virus non-structural protein NS2, C-terminal domain"/>
    <property type="match status" value="1"/>
</dbReference>
<dbReference type="Gene3D" id="1.20.1280.150">
    <property type="entry name" value="Hepatitis C virus non-structural protein NS2, N-terminal domain"/>
    <property type="match status" value="1"/>
</dbReference>
<dbReference type="Gene3D" id="2.20.25.220">
    <property type="entry name" value="Hepatitis C virus NS5A, 1B domain"/>
    <property type="match status" value="1"/>
</dbReference>
<dbReference type="Gene3D" id="3.40.50.300">
    <property type="entry name" value="P-loop containing nucleotide triphosphate hydrolases"/>
    <property type="match status" value="2"/>
</dbReference>
<dbReference type="Gene3D" id="1.10.820.10">
    <property type="entry name" value="RNA Helicase Chain A , domain 3"/>
    <property type="match status" value="1"/>
</dbReference>
<dbReference type="Gene3D" id="2.40.10.10">
    <property type="entry name" value="Trypsin-like serine proteases"/>
    <property type="match status" value="1"/>
</dbReference>
<dbReference type="InterPro" id="IPR043502">
    <property type="entry name" value="DNA/RNA_pol_sf"/>
</dbReference>
<dbReference type="InterPro" id="IPR011492">
    <property type="entry name" value="Flavi_DEAD"/>
</dbReference>
<dbReference type="InterPro" id="IPR002521">
    <property type="entry name" value="HCV_Core_C"/>
</dbReference>
<dbReference type="InterPro" id="IPR044896">
    <property type="entry name" value="HCV_core_chain_A"/>
</dbReference>
<dbReference type="InterPro" id="IPR002522">
    <property type="entry name" value="HCV_core_N"/>
</dbReference>
<dbReference type="InterPro" id="IPR002519">
    <property type="entry name" value="HCV_Env"/>
</dbReference>
<dbReference type="InterPro" id="IPR002531">
    <property type="entry name" value="HCV_NS1"/>
</dbReference>
<dbReference type="InterPro" id="IPR002518">
    <property type="entry name" value="HCV_NS2"/>
</dbReference>
<dbReference type="InterPro" id="IPR042205">
    <property type="entry name" value="HCV_NS2_C"/>
</dbReference>
<dbReference type="InterPro" id="IPR042209">
    <property type="entry name" value="HCV_NS2_N"/>
</dbReference>
<dbReference type="InterPro" id="IPR000745">
    <property type="entry name" value="HCV_NS4a"/>
</dbReference>
<dbReference type="InterPro" id="IPR001490">
    <property type="entry name" value="HCV_NS4b"/>
</dbReference>
<dbReference type="InterPro" id="IPR002868">
    <property type="entry name" value="HCV_NS5a"/>
</dbReference>
<dbReference type="InterPro" id="IPR013192">
    <property type="entry name" value="HCV_NS5A_1a"/>
</dbReference>
<dbReference type="InterPro" id="IPR013193">
    <property type="entry name" value="HCV_NS5a_1B_dom"/>
</dbReference>
<dbReference type="InterPro" id="IPR038568">
    <property type="entry name" value="HCV_NS5A_1B_sf"/>
</dbReference>
<dbReference type="InterPro" id="IPR024350">
    <property type="entry name" value="HCV_NS5a_C"/>
</dbReference>
<dbReference type="InterPro" id="IPR049913">
    <property type="entry name" value="HCV_p7"/>
</dbReference>
<dbReference type="InterPro" id="IPR014001">
    <property type="entry name" value="Helicase_ATP-bd"/>
</dbReference>
<dbReference type="InterPro" id="IPR001650">
    <property type="entry name" value="Helicase_C-like"/>
</dbReference>
<dbReference type="InterPro" id="IPR004109">
    <property type="entry name" value="HepC_NS3_protease"/>
</dbReference>
<dbReference type="InterPro" id="IPR054175">
    <property type="entry name" value="NS3_helicase_C"/>
</dbReference>
<dbReference type="InterPro" id="IPR038170">
    <property type="entry name" value="NS5A_1a_sf"/>
</dbReference>
<dbReference type="InterPro" id="IPR027417">
    <property type="entry name" value="P-loop_NTPase"/>
</dbReference>
<dbReference type="InterPro" id="IPR009003">
    <property type="entry name" value="Peptidase_S1_PA"/>
</dbReference>
<dbReference type="InterPro" id="IPR043504">
    <property type="entry name" value="Peptidase_S1_PA_chymotrypsin"/>
</dbReference>
<dbReference type="InterPro" id="IPR043128">
    <property type="entry name" value="Rev_trsase/Diguanyl_cyclase"/>
</dbReference>
<dbReference type="InterPro" id="IPR007094">
    <property type="entry name" value="RNA-dir_pol_PSvirus"/>
</dbReference>
<dbReference type="InterPro" id="IPR002166">
    <property type="entry name" value="RNA_pol_HCV"/>
</dbReference>
<dbReference type="Pfam" id="PF07652">
    <property type="entry name" value="Flavi_DEAD"/>
    <property type="match status" value="1"/>
</dbReference>
<dbReference type="Pfam" id="PF01543">
    <property type="entry name" value="HCV_capsid"/>
    <property type="match status" value="1"/>
</dbReference>
<dbReference type="Pfam" id="PF01542">
    <property type="entry name" value="HCV_core"/>
    <property type="match status" value="1"/>
</dbReference>
<dbReference type="Pfam" id="PF01539">
    <property type="entry name" value="HCV_env"/>
    <property type="match status" value="1"/>
</dbReference>
<dbReference type="Pfam" id="PF01560">
    <property type="entry name" value="HCV_NS1"/>
    <property type="match status" value="1"/>
</dbReference>
<dbReference type="Pfam" id="PF01538">
    <property type="entry name" value="HCV_NS2"/>
    <property type="match status" value="1"/>
</dbReference>
<dbReference type="Pfam" id="PF01006">
    <property type="entry name" value="HCV_NS4a"/>
    <property type="match status" value="1"/>
</dbReference>
<dbReference type="Pfam" id="PF01001">
    <property type="entry name" value="HCV_NS4b"/>
    <property type="match status" value="1"/>
</dbReference>
<dbReference type="Pfam" id="PF01506">
    <property type="entry name" value="HCV_NS5a"/>
    <property type="match status" value="1"/>
</dbReference>
<dbReference type="Pfam" id="PF08300">
    <property type="entry name" value="HCV_NS5a_1a"/>
    <property type="match status" value="1"/>
</dbReference>
<dbReference type="Pfam" id="PF08301">
    <property type="entry name" value="HCV_NS5a_1b"/>
    <property type="match status" value="1"/>
</dbReference>
<dbReference type="Pfam" id="PF12941">
    <property type="entry name" value="HCV_NS5a_C"/>
    <property type="match status" value="1"/>
</dbReference>
<dbReference type="Pfam" id="PF22027">
    <property type="entry name" value="NS3_helicase_C"/>
    <property type="match status" value="1"/>
</dbReference>
<dbReference type="Pfam" id="PF02907">
    <property type="entry name" value="Peptidase_S29"/>
    <property type="match status" value="1"/>
</dbReference>
<dbReference type="Pfam" id="PF00998">
    <property type="entry name" value="RdRP_3"/>
    <property type="match status" value="1"/>
</dbReference>
<dbReference type="SMART" id="SM00487">
    <property type="entry name" value="DEXDc"/>
    <property type="match status" value="1"/>
</dbReference>
<dbReference type="SUPFAM" id="SSF56672">
    <property type="entry name" value="DNA/RNA polymerases"/>
    <property type="match status" value="1"/>
</dbReference>
<dbReference type="SUPFAM" id="SSF52540">
    <property type="entry name" value="P-loop containing nucleoside triphosphate hydrolases"/>
    <property type="match status" value="2"/>
</dbReference>
<dbReference type="SUPFAM" id="SSF50494">
    <property type="entry name" value="Trypsin-like serine proteases"/>
    <property type="match status" value="1"/>
</dbReference>
<dbReference type="PROSITE" id="PS51693">
    <property type="entry name" value="HCV_NS2_PRO"/>
    <property type="match status" value="1"/>
</dbReference>
<dbReference type="PROSITE" id="PS51192">
    <property type="entry name" value="HELICASE_ATP_BIND_1"/>
    <property type="match status" value="1"/>
</dbReference>
<dbReference type="PROSITE" id="PS51194">
    <property type="entry name" value="HELICASE_CTER"/>
    <property type="match status" value="1"/>
</dbReference>
<dbReference type="PROSITE" id="PS51822">
    <property type="entry name" value="HV_PV_NS3_PRO"/>
    <property type="match status" value="1"/>
</dbReference>
<dbReference type="PROSITE" id="PS50507">
    <property type="entry name" value="RDRP_SSRNA_POS"/>
    <property type="match status" value="1"/>
</dbReference>
<evidence type="ECO:0000250" key="1"/>
<evidence type="ECO:0000250" key="2">
    <source>
        <dbReference type="UniProtKB" id="O92972"/>
    </source>
</evidence>
<evidence type="ECO:0000250" key="3">
    <source>
        <dbReference type="UniProtKB" id="P26662"/>
    </source>
</evidence>
<evidence type="ECO:0000250" key="4">
    <source>
        <dbReference type="UniProtKB" id="P26663"/>
    </source>
</evidence>
<evidence type="ECO:0000250" key="5">
    <source>
        <dbReference type="UniProtKB" id="P26664"/>
    </source>
</evidence>
<evidence type="ECO:0000250" key="6">
    <source>
        <dbReference type="UniProtKB" id="P27958"/>
    </source>
</evidence>
<evidence type="ECO:0000250" key="7">
    <source>
        <dbReference type="UniProtKB" id="P29846"/>
    </source>
</evidence>
<evidence type="ECO:0000250" key="8">
    <source>
        <dbReference type="UniProtKB" id="Q01403"/>
    </source>
</evidence>
<evidence type="ECO:0000250" key="9">
    <source>
        <dbReference type="UniProtKB" id="Q03463"/>
    </source>
</evidence>
<evidence type="ECO:0000250" key="10">
    <source>
        <dbReference type="UniProtKB" id="Q5EG65"/>
    </source>
</evidence>
<evidence type="ECO:0000250" key="11">
    <source>
        <dbReference type="UniProtKB" id="Q913V3"/>
    </source>
</evidence>
<evidence type="ECO:0000250" key="12">
    <source>
        <dbReference type="UniProtKB" id="Q99IB8"/>
    </source>
</evidence>
<evidence type="ECO:0000250" key="13">
    <source>
        <dbReference type="UniProtKB" id="Q9WMX2"/>
    </source>
</evidence>
<evidence type="ECO:0000255" key="14"/>
<evidence type="ECO:0000255" key="15">
    <source>
        <dbReference type="PROSITE-ProRule" id="PRU00539"/>
    </source>
</evidence>
<evidence type="ECO:0000255" key="16">
    <source>
        <dbReference type="PROSITE-ProRule" id="PRU00541"/>
    </source>
</evidence>
<evidence type="ECO:0000255" key="17">
    <source>
        <dbReference type="PROSITE-ProRule" id="PRU01030"/>
    </source>
</evidence>
<evidence type="ECO:0000255" key="18">
    <source>
        <dbReference type="PROSITE-ProRule" id="PRU01166"/>
    </source>
</evidence>
<evidence type="ECO:0000256" key="19">
    <source>
        <dbReference type="SAM" id="MobiDB-lite"/>
    </source>
</evidence>
<evidence type="ECO:0000305" key="20"/>
<protein>
    <recommendedName>
        <fullName>Genome polyprotein</fullName>
    </recommendedName>
    <component>
        <recommendedName>
            <fullName>Core protein precursor</fullName>
        </recommendedName>
        <alternativeName>
            <fullName>Capsid protein C</fullName>
        </alternativeName>
        <alternativeName>
            <fullName>p23</fullName>
        </alternativeName>
    </component>
    <component>
        <recommendedName>
            <fullName>Mature core protein</fullName>
        </recommendedName>
        <alternativeName>
            <fullName>p21</fullName>
        </alternativeName>
    </component>
    <component>
        <recommendedName>
            <fullName>Envelope glycoprotein E1</fullName>
        </recommendedName>
        <alternativeName>
            <fullName>gp32</fullName>
        </alternativeName>
        <alternativeName>
            <fullName>gp35</fullName>
        </alternativeName>
    </component>
    <component>
        <recommendedName>
            <fullName>Envelope glycoprotein E2</fullName>
        </recommendedName>
        <alternativeName>
            <fullName>NS1</fullName>
        </alternativeName>
        <alternativeName>
            <fullName>gp68</fullName>
        </alternativeName>
        <alternativeName>
            <fullName>gp70</fullName>
        </alternativeName>
    </component>
    <component>
        <recommendedName>
            <fullName>Viroporin p7</fullName>
        </recommendedName>
    </component>
    <component>
        <recommendedName>
            <fullName>Protease NS2</fullName>
            <shortName>p23</shortName>
            <ecNumber evidence="4">3.4.22.-</ecNumber>
        </recommendedName>
        <alternativeName>
            <fullName>Non-structural protein 2</fullName>
            <shortName>NS2</shortName>
        </alternativeName>
    </component>
    <component>
        <recommendedName>
            <fullName>Serine protease/helicase NS3</fullName>
            <ecNumber evidence="6">3.4.21.98</ecNumber>
            <ecNumber evidence="6">3.6.1.15</ecNumber>
            <ecNumber evidence="6">3.6.4.13</ecNumber>
        </recommendedName>
        <alternativeName>
            <fullName>Hepacivirin</fullName>
        </alternativeName>
        <alternativeName>
            <fullName evidence="6">NS3 helicase</fullName>
        </alternativeName>
        <alternativeName>
            <fullName evidence="6">NS3 protease</fullName>
        </alternativeName>
        <alternativeName>
            <fullName>NS3P</fullName>
        </alternativeName>
        <alternativeName>
            <fullName>Viroporin p70</fullName>
        </alternativeName>
    </component>
    <component>
        <recommendedName>
            <fullName>Non-structural protein 4A</fullName>
            <shortName>NS4A</shortName>
        </recommendedName>
        <alternativeName>
            <fullName>p8</fullName>
        </alternativeName>
    </component>
    <component>
        <recommendedName>
            <fullName>Non-structural protein 4B</fullName>
            <shortName>NS4B</shortName>
        </recommendedName>
        <alternativeName>
            <fullName>p27</fullName>
        </alternativeName>
    </component>
    <component>
        <recommendedName>
            <fullName>Non-structural protein 5A</fullName>
            <shortName>NS5A</shortName>
        </recommendedName>
        <alternativeName>
            <fullName>p56/58</fullName>
        </alternativeName>
    </component>
    <component>
        <recommendedName>
            <fullName>RNA-directed RNA polymerase</fullName>
            <ecNumber evidence="6">2.7.7.48</ecNumber>
        </recommendedName>
        <alternativeName>
            <fullName>NS5B</fullName>
        </alternativeName>
        <alternativeName>
            <fullName>p68</fullName>
        </alternativeName>
    </component>
</protein>
<name>POLG_HCV6A</name>
<organismHost>
    <name type="scientific">Homo sapiens</name>
    <name type="common">Human</name>
    <dbReference type="NCBI Taxonomy" id="9606"/>
</organismHost>